<reference key="1">
    <citation type="journal article" date="1987" name="Eur. J. Biochem.">
        <title>Signal sequence and DNA-mediated expression of human lysosomal alpha-galactosidase A.</title>
        <authorList>
            <person name="Tsuji S."/>
            <person name="Martin B.M."/>
            <person name="Kaslow D.C."/>
            <person name="Migeon B.R."/>
            <person name="Choudary P.V."/>
            <person name="Stubblefield B.K."/>
            <person name="Mayor J.A."/>
            <person name="Murray G.J."/>
            <person name="Barranger J.A."/>
            <person name="Ginns E.I."/>
        </authorList>
    </citation>
    <scope>NUCLEOTIDE SEQUENCE [MRNA]</scope>
    <source>
        <tissue>Fibroblast</tissue>
    </source>
</reference>
<reference key="2">
    <citation type="journal article" date="1989" name="Nucleic Acids Res.">
        <title>Nucleotide sequence of the human alpha-galactosidase A gene.</title>
        <authorList>
            <person name="Kornreich R."/>
            <person name="Desnick R.J."/>
            <person name="Bishop D.F."/>
        </authorList>
    </citation>
    <scope>NUCLEOTIDE SEQUENCE [GENOMIC DNA]</scope>
    <source>
        <tissue>Lymphoblast</tissue>
    </source>
</reference>
<reference key="3">
    <citation type="journal article" date="1995" name="Mamm. Genome">
        <title>Sixty-nine kilobases of contiguous human genomic sequence containing the alpha-galactosidase A and Bruton's tyrosine kinase loci.</title>
        <authorList>
            <person name="Oeltjen J.C."/>
            <person name="Liu X."/>
            <person name="Lu J."/>
            <person name="Allen R.C."/>
            <person name="Muzny D.M."/>
            <person name="Belmont J.W."/>
            <person name="Gibbs R.A."/>
        </authorList>
    </citation>
    <scope>NUCLEOTIDE SEQUENCE [GENOMIC DNA]</scope>
</reference>
<reference key="4">
    <citation type="journal article" date="2005" name="Nature">
        <title>The DNA sequence of the human X chromosome.</title>
        <authorList>
            <person name="Ross M.T."/>
            <person name="Grafham D.V."/>
            <person name="Coffey A.J."/>
            <person name="Scherer S."/>
            <person name="McLay K."/>
            <person name="Muzny D."/>
            <person name="Platzer M."/>
            <person name="Howell G.R."/>
            <person name="Burrows C."/>
            <person name="Bird C.P."/>
            <person name="Frankish A."/>
            <person name="Lovell F.L."/>
            <person name="Howe K.L."/>
            <person name="Ashurst J.L."/>
            <person name="Fulton R.S."/>
            <person name="Sudbrak R."/>
            <person name="Wen G."/>
            <person name="Jones M.C."/>
            <person name="Hurles M.E."/>
            <person name="Andrews T.D."/>
            <person name="Scott C.E."/>
            <person name="Searle S."/>
            <person name="Ramser J."/>
            <person name="Whittaker A."/>
            <person name="Deadman R."/>
            <person name="Carter N.P."/>
            <person name="Hunt S.E."/>
            <person name="Chen R."/>
            <person name="Cree A."/>
            <person name="Gunaratne P."/>
            <person name="Havlak P."/>
            <person name="Hodgson A."/>
            <person name="Metzker M.L."/>
            <person name="Richards S."/>
            <person name="Scott G."/>
            <person name="Steffen D."/>
            <person name="Sodergren E."/>
            <person name="Wheeler D.A."/>
            <person name="Worley K.C."/>
            <person name="Ainscough R."/>
            <person name="Ambrose K.D."/>
            <person name="Ansari-Lari M.A."/>
            <person name="Aradhya S."/>
            <person name="Ashwell R.I."/>
            <person name="Babbage A.K."/>
            <person name="Bagguley C.L."/>
            <person name="Ballabio A."/>
            <person name="Banerjee R."/>
            <person name="Barker G.E."/>
            <person name="Barlow K.F."/>
            <person name="Barrett I.P."/>
            <person name="Bates K.N."/>
            <person name="Beare D.M."/>
            <person name="Beasley H."/>
            <person name="Beasley O."/>
            <person name="Beck A."/>
            <person name="Bethel G."/>
            <person name="Blechschmidt K."/>
            <person name="Brady N."/>
            <person name="Bray-Allen S."/>
            <person name="Bridgeman A.M."/>
            <person name="Brown A.J."/>
            <person name="Brown M.J."/>
            <person name="Bonnin D."/>
            <person name="Bruford E.A."/>
            <person name="Buhay C."/>
            <person name="Burch P."/>
            <person name="Burford D."/>
            <person name="Burgess J."/>
            <person name="Burrill W."/>
            <person name="Burton J."/>
            <person name="Bye J.M."/>
            <person name="Carder C."/>
            <person name="Carrel L."/>
            <person name="Chako J."/>
            <person name="Chapman J.C."/>
            <person name="Chavez D."/>
            <person name="Chen E."/>
            <person name="Chen G."/>
            <person name="Chen Y."/>
            <person name="Chen Z."/>
            <person name="Chinault C."/>
            <person name="Ciccodicola A."/>
            <person name="Clark S.Y."/>
            <person name="Clarke G."/>
            <person name="Clee C.M."/>
            <person name="Clegg S."/>
            <person name="Clerc-Blankenburg K."/>
            <person name="Clifford K."/>
            <person name="Cobley V."/>
            <person name="Cole C.G."/>
            <person name="Conquer J.S."/>
            <person name="Corby N."/>
            <person name="Connor R.E."/>
            <person name="David R."/>
            <person name="Davies J."/>
            <person name="Davis C."/>
            <person name="Davis J."/>
            <person name="Delgado O."/>
            <person name="Deshazo D."/>
            <person name="Dhami P."/>
            <person name="Ding Y."/>
            <person name="Dinh H."/>
            <person name="Dodsworth S."/>
            <person name="Draper H."/>
            <person name="Dugan-Rocha S."/>
            <person name="Dunham A."/>
            <person name="Dunn M."/>
            <person name="Durbin K.J."/>
            <person name="Dutta I."/>
            <person name="Eades T."/>
            <person name="Ellwood M."/>
            <person name="Emery-Cohen A."/>
            <person name="Errington H."/>
            <person name="Evans K.L."/>
            <person name="Faulkner L."/>
            <person name="Francis F."/>
            <person name="Frankland J."/>
            <person name="Fraser A.E."/>
            <person name="Galgoczy P."/>
            <person name="Gilbert J."/>
            <person name="Gill R."/>
            <person name="Gloeckner G."/>
            <person name="Gregory S.G."/>
            <person name="Gribble S."/>
            <person name="Griffiths C."/>
            <person name="Grocock R."/>
            <person name="Gu Y."/>
            <person name="Gwilliam R."/>
            <person name="Hamilton C."/>
            <person name="Hart E.A."/>
            <person name="Hawes A."/>
            <person name="Heath P.D."/>
            <person name="Heitmann K."/>
            <person name="Hennig S."/>
            <person name="Hernandez J."/>
            <person name="Hinzmann B."/>
            <person name="Ho S."/>
            <person name="Hoffs M."/>
            <person name="Howden P.J."/>
            <person name="Huckle E.J."/>
            <person name="Hume J."/>
            <person name="Hunt P.J."/>
            <person name="Hunt A.R."/>
            <person name="Isherwood J."/>
            <person name="Jacob L."/>
            <person name="Johnson D."/>
            <person name="Jones S."/>
            <person name="de Jong P.J."/>
            <person name="Joseph S.S."/>
            <person name="Keenan S."/>
            <person name="Kelly S."/>
            <person name="Kershaw J.K."/>
            <person name="Khan Z."/>
            <person name="Kioschis P."/>
            <person name="Klages S."/>
            <person name="Knights A.J."/>
            <person name="Kosiura A."/>
            <person name="Kovar-Smith C."/>
            <person name="Laird G.K."/>
            <person name="Langford C."/>
            <person name="Lawlor S."/>
            <person name="Leversha M."/>
            <person name="Lewis L."/>
            <person name="Liu W."/>
            <person name="Lloyd C."/>
            <person name="Lloyd D.M."/>
            <person name="Loulseged H."/>
            <person name="Loveland J.E."/>
            <person name="Lovell J.D."/>
            <person name="Lozado R."/>
            <person name="Lu J."/>
            <person name="Lyne R."/>
            <person name="Ma J."/>
            <person name="Maheshwari M."/>
            <person name="Matthews L.H."/>
            <person name="McDowall J."/>
            <person name="McLaren S."/>
            <person name="McMurray A."/>
            <person name="Meidl P."/>
            <person name="Meitinger T."/>
            <person name="Milne S."/>
            <person name="Miner G."/>
            <person name="Mistry S.L."/>
            <person name="Morgan M."/>
            <person name="Morris S."/>
            <person name="Mueller I."/>
            <person name="Mullikin J.C."/>
            <person name="Nguyen N."/>
            <person name="Nordsiek G."/>
            <person name="Nyakatura G."/>
            <person name="O'dell C.N."/>
            <person name="Okwuonu G."/>
            <person name="Palmer S."/>
            <person name="Pandian R."/>
            <person name="Parker D."/>
            <person name="Parrish J."/>
            <person name="Pasternak S."/>
            <person name="Patel D."/>
            <person name="Pearce A.V."/>
            <person name="Pearson D.M."/>
            <person name="Pelan S.E."/>
            <person name="Perez L."/>
            <person name="Porter K.M."/>
            <person name="Ramsey Y."/>
            <person name="Reichwald K."/>
            <person name="Rhodes S."/>
            <person name="Ridler K.A."/>
            <person name="Schlessinger D."/>
            <person name="Schueler M.G."/>
            <person name="Sehra H.K."/>
            <person name="Shaw-Smith C."/>
            <person name="Shen H."/>
            <person name="Sheridan E.M."/>
            <person name="Shownkeen R."/>
            <person name="Skuce C.D."/>
            <person name="Smith M.L."/>
            <person name="Sotheran E.C."/>
            <person name="Steingruber H.E."/>
            <person name="Steward C.A."/>
            <person name="Storey R."/>
            <person name="Swann R.M."/>
            <person name="Swarbreck D."/>
            <person name="Tabor P.E."/>
            <person name="Taudien S."/>
            <person name="Taylor T."/>
            <person name="Teague B."/>
            <person name="Thomas K."/>
            <person name="Thorpe A."/>
            <person name="Timms K."/>
            <person name="Tracey A."/>
            <person name="Trevanion S."/>
            <person name="Tromans A.C."/>
            <person name="d'Urso M."/>
            <person name="Verduzco D."/>
            <person name="Villasana D."/>
            <person name="Waldron L."/>
            <person name="Wall M."/>
            <person name="Wang Q."/>
            <person name="Warren J."/>
            <person name="Warry G.L."/>
            <person name="Wei X."/>
            <person name="West A."/>
            <person name="Whitehead S.L."/>
            <person name="Whiteley M.N."/>
            <person name="Wilkinson J.E."/>
            <person name="Willey D.L."/>
            <person name="Williams G."/>
            <person name="Williams L."/>
            <person name="Williamson A."/>
            <person name="Williamson H."/>
            <person name="Wilming L."/>
            <person name="Woodmansey R.L."/>
            <person name="Wray P.W."/>
            <person name="Yen J."/>
            <person name="Zhang J."/>
            <person name="Zhou J."/>
            <person name="Zoghbi H."/>
            <person name="Zorilla S."/>
            <person name="Buck D."/>
            <person name="Reinhardt R."/>
            <person name="Poustka A."/>
            <person name="Rosenthal A."/>
            <person name="Lehrach H."/>
            <person name="Meindl A."/>
            <person name="Minx P.J."/>
            <person name="Hillier L.W."/>
            <person name="Willard H.F."/>
            <person name="Wilson R.K."/>
            <person name="Waterston R.H."/>
            <person name="Rice C.M."/>
            <person name="Vaudin M."/>
            <person name="Coulson A."/>
            <person name="Nelson D.L."/>
            <person name="Weinstock G."/>
            <person name="Sulston J.E."/>
            <person name="Durbin R.M."/>
            <person name="Hubbard T."/>
            <person name="Gibbs R.A."/>
            <person name="Beck S."/>
            <person name="Rogers J."/>
            <person name="Bentley D.R."/>
        </authorList>
    </citation>
    <scope>NUCLEOTIDE SEQUENCE [LARGE SCALE GENOMIC DNA]</scope>
</reference>
<reference key="5">
    <citation type="journal article" date="2004" name="Genome Res.">
        <title>The status, quality, and expansion of the NIH full-length cDNA project: the Mammalian Gene Collection (MGC).</title>
        <authorList>
            <consortium name="The MGC Project Team"/>
        </authorList>
    </citation>
    <scope>NUCLEOTIDE SEQUENCE [LARGE SCALE MRNA]</scope>
    <source>
        <tissue>Uterus</tissue>
    </source>
</reference>
<reference key="6">
    <citation type="journal article" date="1986" name="Proc. Natl. Acad. Sci. U.S.A.">
        <title>Human alpha-galactosidase A: nucleotide sequence of a cDNA clone encoding the mature enzyme.</title>
        <authorList>
            <person name="Bishop D.F."/>
            <person name="Calhoun D.H."/>
            <person name="Bernstein H.S."/>
            <person name="Hantzopoulos P."/>
            <person name="Quinn M."/>
            <person name="Desnick R.J."/>
        </authorList>
    </citation>
    <scope>NUCLEOTIDE SEQUENCE [MRNA] OF 27-429</scope>
    <scope>PARTIAL PROTEIN SEQUENCE</scope>
    <source>
        <tissue>Lung</tissue>
    </source>
</reference>
<reference key="7">
    <citation type="journal article" date="1987" name="Gene">
        <title>A genomic clone containing the promoter for the gene encoding the human lysosomal enzyme, alpha-galactosidase A.</title>
        <authorList>
            <person name="Quinn M."/>
            <person name="Hantzopoulos P."/>
            <person name="Fidanza V."/>
            <person name="Calhoun D.H."/>
        </authorList>
    </citation>
    <scope>NUCLEOTIDE SEQUENCE [GENOMIC DNA] OF 1-64</scope>
</reference>
<reference key="8">
    <citation type="journal article" date="1988" name="Proc. Natl. Acad. Sci. U.S.A.">
        <title>Structural organization of the human alpha-galactosidase A gene: further evidence for the absence of a 3' untranslated region.</title>
        <authorList>
            <person name="Bishop D.F."/>
            <person name="Kornreich R."/>
            <person name="Desnick R.J."/>
        </authorList>
    </citation>
    <scope>NUCLEOTIDE SEQUENCE [GENOMIC DNA] OF 1-64</scope>
</reference>
<reference key="9">
    <citation type="journal article" date="1995" name="Nucleic Acids Res.">
        <title>Editing of human alpha-galactosidase RNA resulting in a pyrimidine to purine conversion.</title>
        <authorList>
            <person name="Novo F.J."/>
            <person name="Kruszewski A."/>
            <person name="McDermot K.D."/>
            <person name="Goldspink G."/>
            <person name="Gorecki D.C."/>
        </authorList>
    </citation>
    <scope>RNA EDITING OF POSITION 396</scope>
</reference>
<reference key="10">
    <citation type="journal article" date="1996" name="FEBS Lett.">
        <title>Only sphingolipid activator protein B (SAP-B or saposin B) stimulates the degradation of globotriaosylceramide by recombinant human lysosomal alpha-galactosidase in a detergent-free liposomal system.</title>
        <authorList>
            <person name="Kase R."/>
            <person name="Bierfreund U."/>
            <person name="Klein A."/>
            <person name="Kolter T."/>
            <person name="Itoh K."/>
            <person name="Suzuki M."/>
            <person name="Hashimoto Y."/>
            <person name="Sandhoff K."/>
            <person name="Sakuraba H."/>
        </authorList>
    </citation>
    <scope>FUNCTION</scope>
    <scope>CATALYTIC ACTIVITY</scope>
    <scope>ACTIVITY REGULATION</scope>
</reference>
<reference key="11">
    <citation type="journal article" date="2009" name="J. Proteome Res.">
        <title>Glycoproteomics analysis of human liver tissue by combination of multiple enzyme digestion and hydrazide chemistry.</title>
        <authorList>
            <person name="Chen R."/>
            <person name="Jiang X."/>
            <person name="Sun D."/>
            <person name="Han G."/>
            <person name="Wang F."/>
            <person name="Ye M."/>
            <person name="Wang L."/>
            <person name="Zou H."/>
        </authorList>
    </citation>
    <scope>GLYCOSYLATION [LARGE SCALE ANALYSIS] AT ASN-215</scope>
    <source>
        <tissue>Liver</tissue>
    </source>
</reference>
<reference key="12">
    <citation type="journal article" date="2011" name="BMC Syst. Biol.">
        <title>Initial characterization of the human central proteome.</title>
        <authorList>
            <person name="Burkard T.R."/>
            <person name="Planyavsky M."/>
            <person name="Kaupe I."/>
            <person name="Breitwieser F.P."/>
            <person name="Buerckstuemmer T."/>
            <person name="Bennett K.L."/>
            <person name="Superti-Furga G."/>
            <person name="Colinge J."/>
        </authorList>
    </citation>
    <scope>IDENTIFICATION BY MASS SPECTROMETRY [LARGE SCALE ANALYSIS]</scope>
</reference>
<reference key="13">
    <citation type="journal article" date="2015" name="Proteomics">
        <title>N-terminome analysis of the human mitochondrial proteome.</title>
        <authorList>
            <person name="Vaca Jacome A.S."/>
            <person name="Rabilloud T."/>
            <person name="Schaeffer-Reiss C."/>
            <person name="Rompais M."/>
            <person name="Ayoub D."/>
            <person name="Lane L."/>
            <person name="Bairoch A."/>
            <person name="Van Dorsselaer A."/>
            <person name="Carapito C."/>
        </authorList>
    </citation>
    <scope>IDENTIFICATION BY MASS SPECTROMETRY [LARGE SCALE ANALYSIS]</scope>
</reference>
<reference key="14">
    <citation type="journal article" date="2004" name="J. Mol. Biol.">
        <title>The molecular defect leading to Fabry disease: structure of human alpha-galactosidase.</title>
        <authorList>
            <person name="Garman S.C."/>
            <person name="Garboczi D.N."/>
        </authorList>
    </citation>
    <scope>X-RAY CRYSTALLOGRAPHY (3.45 ANGSTROMS) OF 32-422 IN COMPLEX WITH PRODUCT</scope>
    <scope>HOMODIMERIZATION</scope>
    <scope>GLYCOSYLATION AT ASN-139; ASN-192 AND ASN-215</scope>
</reference>
<reference key="15">
    <citation type="journal article" date="1994" name="Hum. Mutat.">
        <title>Molecular basis of Fabry disease: mutations and polymorphisms in the human alpha-galactosidase A gene.</title>
        <authorList>
            <person name="Eng C.M."/>
            <person name="Desnick R.J."/>
        </authorList>
    </citation>
    <scope>REVIEW ON FD VARIANTS</scope>
</reference>
<reference key="16">
    <citation type="journal article" date="1990" name="FEBS Lett.">
        <title>A case of Fabry's disease in a patient with no alpha-galactosidase A activity caused by a single amino acid substitution of Pro-40 by Ser.</title>
        <authorList>
            <person name="Koide T."/>
            <person name="Ishiura M."/>
            <person name="Iwai K."/>
            <person name="Inoue M."/>
            <person name="Kaneda Y."/>
            <person name="Okada Y."/>
            <person name="Uchida T."/>
        </authorList>
    </citation>
    <scope>INVOLVEMENT IN FD</scope>
    <scope>VARIANT FD SER-40</scope>
</reference>
<reference key="17">
    <citation type="journal article" date="1991" name="N. Engl. J. Med.">
        <title>An atypical variant of Fabry's disease with manifestations confined to the myocardium.</title>
        <authorList>
            <person name="von Scheidt W."/>
            <person name="Eng C.M."/>
            <person name="Fitzmaurice T.F."/>
            <person name="Erdmann E."/>
            <person name="Hubner G."/>
            <person name="Olsen E.G.J."/>
            <person name="Christomanou H."/>
            <person name="Kandolf R."/>
            <person name="Bishop D.F."/>
            <person name="Desnick R.J."/>
        </authorList>
    </citation>
    <scope>VARIANT FD VAL-296</scope>
</reference>
<reference key="18">
    <citation type="journal article" date="1990" name="Am. J. Hum. Genet.">
        <title>Identification of point mutations in the alpha-galactosidase A gene in classical and atypical hemizygotes with Fabry disease.</title>
        <authorList>
            <person name="Sakuraba H."/>
            <person name="Oshima A."/>
            <person name="Fukuhara Y."/>
            <person name="Shimmoto M."/>
            <person name="Nagao Y."/>
            <person name="Bishop D.F."/>
            <person name="Desnick R.J."/>
            <person name="Suzuki Y."/>
        </authorList>
    </citation>
    <scope>VARIANT FD GLN-301</scope>
</reference>
<reference key="19">
    <citation type="journal article" date="1989" name="J. Clin. Invest.">
        <title>Fabry disease: six gene rearrangements and an exonic point mutation in the alpha-galactosidase gene.</title>
        <authorList>
            <person name="Bernstein H.S."/>
            <person name="Bishop D.F."/>
            <person name="Astrin K.H."/>
            <person name="Kornreich R."/>
            <person name="Eng C.M."/>
            <person name="Sakuraba H."/>
            <person name="Desnick R.J."/>
        </authorList>
    </citation>
    <scope>VARIANT FD TRP-356</scope>
</reference>
<reference key="20">
    <citation type="journal article" date="1992" name="Hum. Genet.">
        <title>Point mutations in the upstream region of the alpha-galactosidase A gene exon 6 in an atypical variant of Fabry disease.</title>
        <authorList>
            <person name="Ishii S."/>
            <person name="Sakuraba H."/>
            <person name="Suzuki Y."/>
        </authorList>
    </citation>
    <scope>VARIANTS FD GLN-66; CYS-112; GLU-279; GLN-301 AND ARG-328</scope>
</reference>
<reference key="21">
    <citation type="journal article" date="1993" name="Am. J. Hum. Genet.">
        <title>Nature and frequency of mutations in the alpha-galactosidase A gene that cause Fabry disease.</title>
        <authorList>
            <person name="Eng C.M."/>
            <person name="Resnick-Silverman L.A."/>
            <person name="Niehaus D.J."/>
            <person name="Astrin K.H."/>
            <person name="Desnick R.J."/>
        </authorList>
    </citation>
    <scope>VARIANTS FD SER-34; GLY-56; ARG-162; GLN-227; VAL-264; VAL-266; PHE-297; TYR-313; ALA-328 AND ARG-404 DEL</scope>
</reference>
<reference key="22">
    <citation type="journal article" date="1993" name="Hum. Mol. Genet.">
        <title>Mutation analysis in patients with the typical form of Anderson-Fabry disease.</title>
        <authorList>
            <person name="Davies J.P."/>
            <person name="Winchester B.G."/>
            <person name="Malcolm S."/>
        </authorList>
    </citation>
    <scope>VARIANTS FD SER-34; SER-215; ALA-269; LYS-327 AND ARG-361</scope>
</reference>
<reference key="23">
    <citation type="journal article" date="1994" name="Hum. Mol. Genet.">
        <title>Detection of 8 new mutations in the alpha-galactosidase A gene in Fabry disease.</title>
        <authorList>
            <person name="Davies J.P."/>
            <person name="Christomanou H."/>
            <person name="Winchester B.G."/>
            <person name="Malcolm S."/>
        </authorList>
    </citation>
    <scope>VARIANTS FD ARG-35; LEU-49; VAL-165 AND GLU-316</scope>
</reference>
<reference key="24">
    <citation type="journal article" date="1994" name="Hum. Mol. Genet.">
        <title>Fabry disease: twenty-three mutations including sense and antisense CpG alterations and identification of a deletional hot-spot in the alpha-galactosidase A gene.</title>
        <authorList>
            <person name="Eng C.M."/>
            <person name="Niehaus D.J."/>
            <person name="Enriquez A.L."/>
            <person name="Burgert T.S."/>
            <person name="Ludman M.D."/>
            <person name="Desnick R.J."/>
        </authorList>
    </citation>
    <scope>VARIANTS FD SER-52; PHE-56; LYS-59; ARG-89; LYS-100; HIS-112; PRO-131; PRO-143; VAL-144; SER-146; TYR-172; ASN-219; ASN-244; LYS-272; ASP-288 AND GLN-342</scope>
</reference>
<reference key="25">
    <citation type="journal article" date="1995" name="Biochem. Biophys. Res. Commun.">
        <title>Galactose stabilizes various missense mutants of alpha-galactosidase in Fabry disease.</title>
        <authorList>
            <person name="Okumiya T."/>
            <person name="Ishii S."/>
            <person name="Takenaka T."/>
            <person name="Kase R."/>
            <person name="Kamei S."/>
            <person name="Sakuraba H."/>
            <person name="Suzuki Y."/>
        </authorList>
    </citation>
    <scope>VARIANTS FD GLN-66; CYS-112; VAL-156; VAL-166; ALA-260; GLU-279; ILE-296; GLN-301; LYS-320; ARG-328 AND SER-373</scope>
</reference>
<reference key="26">
    <citation type="journal article" date="1995" name="Hum. Genet.">
        <title>Alpha-galactosidase gene mutations in Fabry disease: heterogeneous expressions of mutant enzyme proteins.</title>
        <authorList>
            <person name="Okumiya T."/>
            <person name="Ishii S."/>
            <person name="Kase R."/>
            <person name="Kamei S."/>
            <person name="Sakuraba H."/>
            <person name="Suzuki Y."/>
        </authorList>
    </citation>
    <scope>VARIANTS FD TYR-142; VAL-156 AND VAL-166</scope>
</reference>
<reference key="27">
    <citation type="journal article" date="1995" name="Hum. Mutat.">
        <title>Two novel mutations (L32P) and (G85N) among five different missense mutations in six Danish families with Fabry's disease.</title>
        <authorList>
            <person name="Madsen K.M."/>
            <person name="Hasholt L."/>
            <person name="Soerensen S.A."/>
            <person name="Lagerstroem Fermer M."/>
            <person name="Dahl N."/>
        </authorList>
    </citation>
    <scope>VARIANTS FD PRO-32; SER-34; ASP-85; THR-156 AND GLN-301</scope>
</reference>
<reference key="28">
    <citation type="journal article" date="1995" name="N. Engl. J. Med.">
        <title>An atypical variant of Fabry's disease in men with left ventricular hypertrophy.</title>
        <authorList>
            <person name="Nakao S."/>
            <person name="Takenaka T."/>
            <person name="Maeda M."/>
            <person name="Kodama C."/>
            <person name="Tanaka A."/>
            <person name="Tahara M."/>
            <person name="Yoshida A."/>
            <person name="Kuriyama M."/>
            <person name="Hayashibe H."/>
            <person name="Sakuraba H."/>
            <person name="Tanaka H."/>
        </authorList>
    </citation>
    <scope>VARIANTS FD PRO-20 AND ILE-296</scope>
</reference>
<reference key="29">
    <citation type="journal article" date="1996" name="Clin. Nephrol.">
        <title>Point mutation in the alpha-galactosidase A gene of atypical Fabry disease with only nephropathy.</title>
        <authorList>
            <person name="Sawada K."/>
            <person name="Mizoguchi K."/>
            <person name="Hishida A."/>
            <person name="Kaneko E."/>
            <person name="Koide Y."/>
            <person name="Nishimura K."/>
            <person name="Kimura M."/>
        </authorList>
    </citation>
    <scope>VARIANT FD GLN-301</scope>
</reference>
<reference key="30">
    <citation type="journal article" date="1996" name="Eur. J. Hum. Genet.">
        <title>Fabry disease: fourteen alpha-galactosidase A mutations in unrelated families from the United Kingdom and other European countries.</title>
        <authorList>
            <person name="Davies J.P."/>
            <person name="Eng C.M."/>
            <person name="Hill J.A."/>
            <person name="Malcolm S."/>
            <person name="MacDermot K."/>
            <person name="Winchester B.G."/>
            <person name="Desnick R.J."/>
        </authorList>
    </citation>
    <scope>VARIANTS FD VAL-42; SER-49; TYR-56; HIS-92; GLY-93; THR-205; CYS-236; GLY-287; HIS-298 AND ARG-340</scope>
</reference>
<reference key="31">
    <citation type="journal article" date="1996" name="Hum. Genet.">
        <title>Novel trinucleotide deletion in Fabry's disease.</title>
        <authorList>
            <person name="Cariolou M.A."/>
            <person name="Christodoulides M."/>
            <person name="Manoli P."/>
            <person name="Kokkofitou A."/>
            <person name="Tsambaos D."/>
        </authorList>
    </citation>
    <scope>VARIANT FD PHE-383 DEL</scope>
</reference>
<reference key="32">
    <citation type="journal article" date="1996" name="Hum. Genet.">
        <title>Fluorescence-assisted mismatch analysis (FAMA) for exhaustive screening of the alpha-galactosidase A gene and detection of carriers in Fabry disease.</title>
        <authorList>
            <person name="Germain D.P."/>
            <person name="Biasotto M."/>
            <person name="Tosi M."/>
            <person name="Meo T."/>
            <person name="Kahn A."/>
            <person name="Poenaru L."/>
        </authorList>
    </citation>
    <scope>VARIANTS FD ARG-52; CYS-162; ARG-265 AND 316-VAL--ASP-322 DEL</scope>
</reference>
<reference key="33">
    <citation type="journal article" date="1996" name="Hum. Mutat.">
        <title>A sensitive mutation screening strategy for Fabry disease: detection of nine mutations in the alpha-galactosidase A gene.</title>
        <authorList>
            <person name="Blanch L.C."/>
            <person name="Meaney C."/>
            <person name="Morris C.P."/>
        </authorList>
    </citation>
    <scope>VARIANTS FD ARG-52; GLU-128; THR-205; THR-284; LYS-298 AND GLU-358 DEL</scope>
</reference>
<reference key="34">
    <citation type="journal article" date="1996" name="J. Med. Genet.">
        <title>Uneven X inactivation in a female monozygotic twin pair with Fabry disease and discordant expression of a novel mutation in the alpha-galactosidase A gene.</title>
        <authorList>
            <person name="Redonnet-Vernhet I."/>
            <person name="Ploos van Amstel J.K."/>
            <person name="Jansen R.P.M."/>
            <person name="Wevers R.A."/>
            <person name="Salvayre R."/>
            <person name="Levade T."/>
        </authorList>
    </citation>
    <scope>VARIANT FD ASN-231</scope>
</reference>
<reference key="35">
    <citation type="journal article" date="1997" name="Brain Dev.">
        <title>Screening and detection of gene mutations in Japanese patients with Fabry disease by non-radioactive single-stranded conformation polymorphism analysis.</title>
        <authorList>
            <person name="Takata T."/>
            <person name="Okumiya T."/>
            <person name="Hayashibe H."/>
            <person name="Shimmoto M."/>
            <person name="Kase R."/>
            <person name="Itoh K."/>
            <person name="Utsumi K."/>
            <person name="Kamei S."/>
            <person name="Sakuraba H."/>
        </authorList>
    </citation>
    <scope>VARIANTS FD PRO-20; SER-40; GLN-66; VAL-72; CYS-112; TYR-142; VAL-156; VAL-166; ASN-242; ALA-260; ASP-261; GLU-279; ILE-296; GLN-301; LYS-320; ARG-328; GLU-358 DEL AND SER-373</scope>
</reference>
<reference key="36">
    <citation type="journal article" date="1997" name="Mol. Med.">
        <title>Fabry disease: thirty-five mutations in the alpha-galactosidase A gene in patients with classic and variant phenotypes.</title>
        <authorList>
            <person name="Eng C.M."/>
            <person name="Ashley G.A."/>
            <person name="Burgert T.S."/>
            <person name="Enriquez A.L."/>
            <person name="D'Souza M."/>
            <person name="Desnick R.J."/>
        </authorList>
    </citation>
    <scope>VARIANTS FD VAL-31; 45-LEU-HIS-46 DELINS ARG-SER; ARG-46; CYS-86; PRO-89; THR-91; TYR-92; TYR-94; VAL-97; THR-100; LEU-113; SER-134; ARG-138; THR-143; ARG-148; VAL-163; VAL-170; TYR-202; 205-PRO--TYR-207 DEL; ASP-216; SER-263; CYS-287; SER-298 AND ARG-404 DEL</scope>
</reference>
<reference key="37">
    <citation type="journal article" date="1998" name="Hum. Mutat.">
        <title>Identification of a novel point mutation (S65T) in alpha-galactosidase A gene in Chinese patients with Fabry disease.</title>
        <authorList>
            <person name="Chen C.-H."/>
            <person name="Shyu P.-W."/>
            <person name="Wu S.-J."/>
            <person name="Sheu S.-S."/>
            <person name="Desnick R.J."/>
            <person name="Hsiao K.-J."/>
        </authorList>
    </citation>
    <scope>VARIANT FD THR-65</scope>
</reference>
<reference key="38">
    <citation type="journal article" date="1998" name="Hum. Mutat. Suppl.">
        <title>A novel mutation (E358K) in the alpha-galactosidase A gene detected in a Japanese family with Fabry disease.</title>
        <authorList>
            <person name="Miyazaki T."/>
            <person name="Kajita M."/>
            <person name="Ohmori S."/>
            <person name="Mizutani N."/>
            <person name="Niwa T."/>
            <person name="Murata Y."/>
            <person name="Seo H."/>
        </authorList>
    </citation>
    <scope>VARIANT FD LYS-358</scope>
</reference>
<reference key="39">
    <citation type="journal article" date="1998" name="Hum. Mutat. Suppl.">
        <title>Novel missense mutation (M72V) of alpha-galactosidase gene and its expression product in an atypical Fabry hemizygote.</title>
        <authorList>
            <person name="Okumiya T."/>
            <person name="Kawamura O."/>
            <person name="Itoh K."/>
            <person name="Kase R."/>
            <person name="Ishii S."/>
            <person name="Kamei S."/>
            <person name="Sakuraba H."/>
        </authorList>
    </citation>
    <scope>VARIANT FD VAL-72</scope>
</reference>
<reference key="40">
    <citation type="journal article" date="1998" name="Hum. Mutat. Suppl.">
        <title>Mutation analysis in 11 French patients with Fabry disease.</title>
        <authorList>
            <person name="Guffon N."/>
            <person name="Froissart R."/>
            <person name="Chevalier-Porst F."/>
            <person name="Maire I."/>
        </authorList>
    </citation>
    <scope>VARIANTS FD SER-40; SER-215; ASP-224; TYR-313 AND TRP-THR-SER-247 INS</scope>
</reference>
<reference key="41">
    <citation type="journal article" date="1999" name="Biochem. Biophys. Res. Commun.">
        <title>Fabry disease: identification of novel alpha-galactosidase A mutations and molecular carrier detection by use of fluorescent chemical cleavage of mismatches.</title>
        <authorList>
            <person name="Germain D.P."/>
            <person name="Poenaru L."/>
        </authorList>
    </citation>
    <scope>VARIANTS FD TRP-202; GLY-223; ASP-224; GLN-301 AND LYS-327</scope>
</reference>
<reference key="42">
    <citation type="journal article" date="1999" name="Clin. Chim. Acta">
        <title>The multiple cases of Fabry disease in a Russian family caused by an E341K amino acid substitution in the alpha-galactosidase A.</title>
        <authorList>
            <person name="Beyer E.M."/>
            <person name="Karpova E.A."/>
            <person name="Udalova O.V."/>
            <person name="Ploos van Amstel J.K."/>
            <person name="van Diggelen O.P."/>
            <person name="Tsvetkova I.V."/>
        </authorList>
    </citation>
    <scope>VARIANT FD LYS-341</scope>
</reference>
<reference key="43">
    <citation type="journal article" date="2000" name="Biochim. Biophys. Acta">
        <title>Characterization of two alpha-galactosidase mutants (Q279E and R301Q) found in an atypical variant of Fabry disease.</title>
        <authorList>
            <person name="Kase R."/>
            <person name="Bierfreund U."/>
            <person name="Klein A."/>
            <person name="Kolter T."/>
            <person name="Utsumi K."/>
            <person name="Itoh K."/>
            <person name="Sandhoff K."/>
            <person name="Sakuraba H."/>
        </authorList>
    </citation>
    <scope>CHARACTERIZATION OF VARIANTS FD GLU-279 AND GLN-301</scope>
    <scope>FUNCTION</scope>
    <scope>CATALYTIC ACTIVITY</scope>
    <scope>ACTIVITY REGULATION</scope>
</reference>
<reference key="44">
    <citation type="journal article" date="1999" name="Mol. Med.">
        <title>Twenty novel mutations in the alpha-galactosidase A gene causing Fabry disease.</title>
        <authorList>
            <person name="Topaloglu A.K."/>
            <person name="Ashley G.A."/>
            <person name="Tong B."/>
            <person name="Shabbeer J."/>
            <person name="Astrin K.H."/>
            <person name="Eng C.M."/>
            <person name="Desnick R.J."/>
        </authorList>
    </citation>
    <scope>VARIANTS FD VAL-42; CYS-112; ARG-142; ARG-148; VAL-165; ASP-183; SER-215; CYS-235; LEU-236; HIS-244; LEU-259; ILE-267; PHE-289; GLU-321; GLU-358 DEL AND TYR-378</scope>
</reference>
<reference key="45">
    <citation type="journal article" date="2000" name="Clin. Genet.">
        <title>Identification of four novel mutations in five unrelated Korean families with Fabry disease.</title>
        <authorList>
            <person name="Lee J.-K."/>
            <person name="Kim G.-H."/>
            <person name="Kim J.-S."/>
            <person name="Kim K.-K."/>
            <person name="Lee M.-C."/>
            <person name="Yoo H.-W."/>
        </authorList>
    </citation>
    <scope>VARIANT FD ASN-266</scope>
</reference>
<reference key="46">
    <citation type="journal article" date="2000" name="J. Invest. Med.">
        <title>Fabry disease: twenty-two novel mutations in the alpha-galactosidase A gene and genotype/phenotype correlations in severely and mildly affected hemizygotes and heterozygotes.</title>
        <authorList>
            <person name="Ashton-Prolla P."/>
            <person name="Tong B."/>
            <person name="Shabbeer J."/>
            <person name="Astrin K.H."/>
            <person name="Eng C.M."/>
            <person name="Desnick R.J."/>
        </authorList>
    </citation>
    <scope>VARIANTS FD LEU-40; SER-95; CYS-112; HIS-112; ASN-148; ARG-172; VAL-187; SER-224; ARG-226; GLN-227; THR-230; HIS-266; GLN-301 AND TYR-320</scope>
</reference>
<reference key="47">
    <citation type="journal article" date="2001" name="Hum. Mutat.">
        <title>Identification of a novel de novo mutation (G373D) in the alpha-galactosidase A gene (GLA) in a patient affected with Fabry disease.</title>
        <authorList>
            <person name="Germain D.P."/>
            <person name="Salard D."/>
            <person name="Fellmann F."/>
            <person name="Azibi K."/>
            <person name="Caillaud C."/>
            <person name="Bernard M.-C."/>
            <person name="Poenaru L."/>
        </authorList>
    </citation>
    <scope>VARIANT FD ASP-373</scope>
</reference>
<reference key="48">
    <citation type="journal article" date="2001" name="Hum. Mutat.">
        <title>Fabry disease: 20 novel GLA mutations in 35 families.</title>
        <authorList>
            <person name="Blaydon D."/>
            <person name="Hill J.A."/>
            <person name="Winchester B.G."/>
        </authorList>
    </citation>
    <scope>VARIANTS FD TYR-46; GLY-47; PRO-49; SER-94; SER-95; CYS-112; SER-113; THR-143; SER-215; ARG-258; ARG-259; ILE-267; HIS-279; HIS-280; HIS-298; TYR-313; HIS-363; ASP-377; ALA-409 AND THR-409</scope>
</reference>
<reference key="49">
    <citation type="journal article" date="2002" name="Medicine (Baltimore)">
        <title>Natural history of Fabry renal disease: influence of alpha-galactosidase A activity and genetic mutations on clinical course.</title>
        <authorList>
            <person name="Branton M.H."/>
            <person name="Schiffmann R."/>
            <person name="Sabnis S.G."/>
            <person name="Murray G.J."/>
            <person name="Quirk J.M."/>
            <person name="Altarescu G."/>
            <person name="Goldfarb L."/>
            <person name="Brady R.O."/>
            <person name="Balow J.E."/>
            <person name="Austin H.A. III"/>
            <person name="Kopp J.B."/>
        </authorList>
    </citation>
    <scope>VARIANT FD PRO-143</scope>
</reference>
<reference key="50">
    <citation type="journal article" date="2003" name="Clin. Genet.">
        <title>Two novel mutations in the alpha-galactosidase A gene in Chinese patients with Fabry disease.</title>
        <authorList>
            <person name="Yang C.-C."/>
            <person name="Lai L.-W."/>
            <person name="Whitehair O."/>
            <person name="Hwu W.-L."/>
            <person name="Chiang S.-C."/>
            <person name="Lien Y.-H.H."/>
        </authorList>
    </citation>
    <scope>VARIANT FD ALA-410</scope>
</reference>
<reference key="51">
    <citation type="journal article" date="2003" name="Clin. Genet.">
        <title>Analysis of splice-site mutations of the alpha-galactosidase A gene in Fabry disease.</title>
        <authorList>
            <person name="Lai L.-W."/>
            <person name="Whitehair O."/>
            <person name="Wu M.-J."/>
            <person name="O'Meara M."/>
            <person name="Lien Y.-H.H."/>
        </authorList>
    </citation>
    <scope>CHARACTERIZATION OF VARIANT FD THR-65</scope>
</reference>
<reference key="52">
    <citation type="journal article" date="2004" name="Eur. J. Hum. Genet.">
        <title>Remarkable variability in renal disease in a large Slovenian family with Fabry disease.</title>
        <authorList>
            <person name="Verovnik F."/>
            <person name="Benko D."/>
            <person name="Vujkovac B."/>
            <person name="Linthorst G.E."/>
        </authorList>
    </citation>
    <scope>VARIANT FD SER-272</scope>
</reference>
<reference key="53">
    <citation type="journal article" date="2005" name="Hum. Mutat.">
        <title>Detection of alpha-galactosidase a mutations causing Fabry disease by denaturing high performance liquid chromatography.</title>
        <authorList>
            <person name="Shabbeer J."/>
            <person name="Robinson M."/>
            <person name="Desnick R.J."/>
        </authorList>
    </citation>
    <scope>VARIANTS FD VAL-31; LEU-42; ARG-43; ASN-93; CYS-112; HIS-112; SER-112; SER-134; VAL-135; ASP-171; PHE-201; SER-215; GLU-234; ASP-261; TYR-264; VAL-264; GLY-276; PRO-285; PHE-300; ALA-328; VAL-328; LYS-338; ALA-358; GLU-358 DEL; ARG-404 DEL AND SER-414</scope>
</reference>
<reference key="54">
    <citation type="journal article" date="2006" name="Arch. Neurol.">
        <title>Later-onset Fabry disease: an adult variant presenting with the cramp-fasciculation syndrome.</title>
        <authorList>
            <person name="Nance C.S."/>
            <person name="Klein C.J."/>
            <person name="Banikazemi M."/>
            <person name="Dikman S.H."/>
            <person name="Phelps R.G."/>
            <person name="McArthur J.C."/>
            <person name="Rodriguez M."/>
            <person name="Desnick R.J."/>
        </authorList>
    </citation>
    <scope>VARIANT FD THR-143</scope>
</reference>
<reference key="55">
    <citation type="journal article" date="2009" name="Hum. Mutat.">
        <title>Newborn screening for Fabry disease in Taiwan reveals a high incidence of the later-onset GLA mutation c.936+919G&gt;A (IVS4+919G&gt;A).</title>
        <authorList>
            <person name="Hwu W.L."/>
            <person name="Chien Y.H."/>
            <person name="Lee N.C."/>
            <person name="Chiang S.C."/>
            <person name="Dobrovolny R."/>
            <person name="Huang A.C."/>
            <person name="Yeh H.Y."/>
            <person name="Chao M.C."/>
            <person name="Lin S.J."/>
            <person name="Kitagawa T."/>
            <person name="Desnick R.J."/>
            <person name="Hsu L.W."/>
        </authorList>
    </citation>
    <scope>VARIANTS FD 12-CYS--LEU-14 DEL; PRO-46; GLN-66; ASN-93; VAL-120; THR-219; GLN-356 AND CYS-360</scope>
    <scope>CHARACTERIZATION OF VARIANTS FD 12-CYS--LEU-14 DEL; PRO-46; GLN-66; ASN-93; VAL-120; THR-219; GLN-356 AND CYS-360</scope>
</reference>
<reference key="56">
    <citation type="journal article" date="2016" name="Hum. Mutat.">
        <title>Functional and clinical consequences of novel alpha-galactosidase A mutations in Fabry disease.</title>
        <authorList>
            <person name="Lukas J."/>
            <person name="Scalia S."/>
            <person name="Eichler S."/>
            <person name="Pockrandt A.M."/>
            <person name="Dehn N."/>
            <person name="Cozma C."/>
            <person name="Giese A.K."/>
            <person name="Rolfs A."/>
        </authorList>
    </citation>
    <scope>CHARACTERIZATION OF VARIANTS FD ASP-20; PRO-20; PRO-21; GLY-33; GLU-35; TRP-36; SER-40; THR-42; PRO-45; ASP-48; TYR-56; LEU-60; PHE-64; ASP-80; HIS-86; ASN-91; THR-91; SER-94; TYR-94; ILE-113; THR-121; LEU-164; GLY-164; GLN-167; PHE-180; VAL-187; SER-196; THR-198; TYR-202; ARG-204; ARG-213; LEU-214; MET-219; PRO-227; SER-228; VAL-242; PHE-243; PRO-247; LYS-249; THR-253; ALA-254; ARG-259; ARG-262; GLY-269; GLY-276; VAL-309; ASN-315; ALA-316; SER-317; TYR-320; ARG-323; ARG-327; LEU-327; ARG-328; ARG-330; PRO-342; GLY-352; PRO-356; LYS-358; SER-360; ALA-375; SER-392; SER-399 AND ARG-404 DEL</scope>
    <scope>CHARACTERIZATION OF VARIANTS PRO-3; VAL-3; GLY-71; THR-154; VAL-289 AND ASN-313</scope>
    <scope>CATALYTIC ACTIVITY</scope>
    <scope>FUNCTION</scope>
</reference>
<reference key="57">
    <citation type="journal article" date="2016" name="Int. J. Neurosci.">
        <title>A novel mutation of alpha-galactosidase A gene causes Fabry disease mimicking primary erythromelalgia in a Chinese family.</title>
        <authorList>
            <person name="Ge W."/>
            <person name="Wei B."/>
            <person name="Zhu H."/>
            <person name="Miao Z."/>
            <person name="Zhang W."/>
            <person name="Leng C."/>
            <person name="Li J."/>
            <person name="Zhang D."/>
            <person name="Sun M."/>
            <person name="Xu X."/>
        </authorList>
    </citation>
    <scope>VARIANT FD ARG-47</scope>
    <scope>CHARACTERIZATION OF VARIANTS FD ARG-47 AND GLY-47</scope>
    <scope>CATALYTIC ACTIVITY</scope>
    <scope>FUNCTION</scope>
</reference>
<reference key="58">
    <citation type="journal article" date="2016" name="Orphanet J. Rare Dis.">
        <title>Alpha-Galactosidase A p.A143T, a non-Fabry disease-causing variant.</title>
        <authorList>
            <person name="Lenders M."/>
            <person name="Weidemann F."/>
            <person name="Kurschat C."/>
            <person name="Canaan-Kuehl S."/>
            <person name="Duning T."/>
            <person name="Stypmann J."/>
            <person name="Schmitz B."/>
            <person name="Reiermann S."/>
            <person name="Kraemer J."/>
            <person name="Blaschke D."/>
            <person name="Wanner C."/>
            <person name="Brand S.M."/>
            <person name="Brand E."/>
        </authorList>
    </citation>
    <scope>VARIANT FD THR-143</scope>
</reference>
<name>AGAL_HUMAN</name>
<protein>
    <recommendedName>
        <fullName evidence="49">Alpha-galactosidase A</fullName>
        <ecNumber evidence="24 26">3.2.1.22</ecNumber>
    </recommendedName>
    <alternativeName>
        <fullName>Alpha-D-galactosidase A</fullName>
    </alternativeName>
    <alternativeName>
        <fullName>Alpha-D-galactoside galactohydrolase</fullName>
    </alternativeName>
    <alternativeName>
        <fullName evidence="49">Galactosylgalactosylglucosylceramidase GLA</fullName>
    </alternativeName>
    <alternativeName>
        <fullName>Melibiase</fullName>
    </alternativeName>
    <innName>Agalsidase</innName>
</protein>
<organism>
    <name type="scientific">Homo sapiens</name>
    <name type="common">Human</name>
    <dbReference type="NCBI Taxonomy" id="9606"/>
    <lineage>
        <taxon>Eukaryota</taxon>
        <taxon>Metazoa</taxon>
        <taxon>Chordata</taxon>
        <taxon>Craniata</taxon>
        <taxon>Vertebrata</taxon>
        <taxon>Euteleostomi</taxon>
        <taxon>Mammalia</taxon>
        <taxon>Eutheria</taxon>
        <taxon>Euarchontoglires</taxon>
        <taxon>Primates</taxon>
        <taxon>Haplorrhini</taxon>
        <taxon>Catarrhini</taxon>
        <taxon>Hominidae</taxon>
        <taxon>Homo</taxon>
    </lineage>
</organism>
<proteinExistence type="evidence at protein level"/>
<sequence length="429" mass="48767">MQLRNPELHLGCALALRFLALVSWDIPGARALDNGLARTPTMGWLHWERFMCNLDCQEEPDSCISEKLFMEMAELMVSEGWKDAGYEYLCIDDCWMAPQRDSEGRLQADPQRFPHGIRQLANYVHSKGLKLGIYADVGNKTCAGFPGSFGYYDIDAQTFADWGVDLLKFDGCYCDSLENLADGYKHMSLALNRTGRSIVYSCEWPLYMWPFQKPNYTEIRQYCNHWRNFADIDDSWKSIKSILDWTSFNQERIVDVAGPGGWNDPDMLVIGNFGLSWNQQVTQMALWAIMAAPLFMSNDLRHISPQAKALLQDKDVIAINQDPLGKQGYQLRQGDNFEVWERPLSGLAWAVAMINRQEIGGPRSYTIAVASLGKGVACNPACFITQLLPVKRKLGFYEWTSRLRSHINPTGTVLLQLENTMQMSLKDLL</sequence>
<accession>P06280</accession>
<accession>Q6LER7</accession>
<keyword id="KW-0002">3D-structure</keyword>
<keyword id="KW-0903">Direct protein sequencing</keyword>
<keyword id="KW-0225">Disease variant</keyword>
<keyword id="KW-1015">Disulfide bond</keyword>
<keyword id="KW-0325">Glycoprotein</keyword>
<keyword id="KW-0326">Glycosidase</keyword>
<keyword id="KW-0378">Hydrolase</keyword>
<keyword id="KW-0443">Lipid metabolism</keyword>
<keyword id="KW-0458">Lysosome</keyword>
<keyword id="KW-0582">Pharmaceutical</keyword>
<keyword id="KW-1267">Proteomics identification</keyword>
<keyword id="KW-1185">Reference proteome</keyword>
<keyword id="KW-0691">RNA editing</keyword>
<keyword id="KW-0732">Signal</keyword>
<dbReference type="EC" id="3.2.1.22" evidence="24 26"/>
<dbReference type="EMBL" id="X05790">
    <property type="protein sequence ID" value="CAA29232.1"/>
    <property type="molecule type" value="mRNA"/>
</dbReference>
<dbReference type="EMBL" id="X14448">
    <property type="protein sequence ID" value="CAA32617.1"/>
    <property type="molecule type" value="Genomic_DNA"/>
</dbReference>
<dbReference type="EMBL" id="U78027">
    <property type="protein sequence ID" value="AAB64203.1"/>
    <property type="molecule type" value="Genomic_DNA"/>
</dbReference>
<dbReference type="EMBL" id="AL035422">
    <property type="status" value="NOT_ANNOTATED_CDS"/>
    <property type="molecule type" value="Genomic_DNA"/>
</dbReference>
<dbReference type="EMBL" id="BC002689">
    <property type="protein sequence ID" value="AAH02689.1"/>
    <property type="molecule type" value="mRNA"/>
</dbReference>
<dbReference type="EMBL" id="M13571">
    <property type="protein sequence ID" value="AAA51676.1"/>
    <property type="molecule type" value="Genomic_DNA"/>
</dbReference>
<dbReference type="EMBL" id="D00039">
    <property type="protein sequence ID" value="BAA34059.1"/>
    <property type="molecule type" value="mRNA"/>
</dbReference>
<dbReference type="EMBL" id="M18242">
    <property type="protein sequence ID" value="AAA52514.1"/>
    <property type="molecule type" value="Genomic_DNA"/>
</dbReference>
<dbReference type="EMBL" id="X16889">
    <property type="status" value="NOT_ANNOTATED_CDS"/>
    <property type="molecule type" value="mRNA"/>
</dbReference>
<dbReference type="EMBL" id="M20317">
    <property type="protein sequence ID" value="AAA52559.1"/>
    <property type="status" value="ALT_SEQ"/>
    <property type="molecule type" value="Genomic_DNA"/>
</dbReference>
<dbReference type="CCDS" id="CCDS14484.1"/>
<dbReference type="PIR" id="S04081">
    <property type="entry name" value="GBHUA"/>
</dbReference>
<dbReference type="RefSeq" id="NP_000160.1">
    <property type="nucleotide sequence ID" value="NM_000169.3"/>
</dbReference>
<dbReference type="PDB" id="1R46">
    <property type="method" value="X-ray"/>
    <property type="resolution" value="3.25 A"/>
    <property type="chains" value="A/B=32-429"/>
</dbReference>
<dbReference type="PDB" id="1R47">
    <property type="method" value="X-ray"/>
    <property type="resolution" value="3.45 A"/>
    <property type="chains" value="A/B=32-429"/>
</dbReference>
<dbReference type="PDB" id="3GXN">
    <property type="method" value="X-ray"/>
    <property type="resolution" value="3.01 A"/>
    <property type="chains" value="A/B=32-429"/>
</dbReference>
<dbReference type="PDB" id="3GXP">
    <property type="method" value="X-ray"/>
    <property type="resolution" value="2.20 A"/>
    <property type="chains" value="A/B=32-429"/>
</dbReference>
<dbReference type="PDB" id="3GXT">
    <property type="method" value="X-ray"/>
    <property type="resolution" value="2.70 A"/>
    <property type="chains" value="A/B=32-429"/>
</dbReference>
<dbReference type="PDB" id="3HG2">
    <property type="method" value="X-ray"/>
    <property type="resolution" value="2.30 A"/>
    <property type="chains" value="A/B=32-429"/>
</dbReference>
<dbReference type="PDB" id="3HG3">
    <property type="method" value="X-ray"/>
    <property type="resolution" value="1.90 A"/>
    <property type="chains" value="A/B=32-429"/>
</dbReference>
<dbReference type="PDB" id="3HG4">
    <property type="method" value="X-ray"/>
    <property type="resolution" value="2.30 A"/>
    <property type="chains" value="A/B=32-429"/>
</dbReference>
<dbReference type="PDB" id="3HG5">
    <property type="method" value="X-ray"/>
    <property type="resolution" value="2.30 A"/>
    <property type="chains" value="A/B=32-429"/>
</dbReference>
<dbReference type="PDB" id="3LX9">
    <property type="method" value="X-ray"/>
    <property type="resolution" value="2.04 A"/>
    <property type="chains" value="A/B=32-429"/>
</dbReference>
<dbReference type="PDB" id="3LXA">
    <property type="method" value="X-ray"/>
    <property type="resolution" value="3.04 A"/>
    <property type="chains" value="A/B=32-429"/>
</dbReference>
<dbReference type="PDB" id="3LXB">
    <property type="method" value="X-ray"/>
    <property type="resolution" value="2.85 A"/>
    <property type="chains" value="A/B=32-429"/>
</dbReference>
<dbReference type="PDB" id="3LXC">
    <property type="method" value="X-ray"/>
    <property type="resolution" value="2.35 A"/>
    <property type="chains" value="A/B=32-429"/>
</dbReference>
<dbReference type="PDB" id="3S5Y">
    <property type="method" value="X-ray"/>
    <property type="resolution" value="2.10 A"/>
    <property type="chains" value="A/B=32-429"/>
</dbReference>
<dbReference type="PDB" id="3S5Z">
    <property type="method" value="X-ray"/>
    <property type="resolution" value="2.00 A"/>
    <property type="chains" value="A/B=32-429"/>
</dbReference>
<dbReference type="PDB" id="3TV8">
    <property type="method" value="X-ray"/>
    <property type="resolution" value="2.64 A"/>
    <property type="chains" value="A/B=32-429"/>
</dbReference>
<dbReference type="PDB" id="4NXS">
    <property type="method" value="X-ray"/>
    <property type="resolution" value="2.55 A"/>
    <property type="chains" value="A/B=32-429"/>
</dbReference>
<dbReference type="PDB" id="6IBK">
    <property type="method" value="X-ray"/>
    <property type="resolution" value="1.99 A"/>
    <property type="chains" value="A/B=32-429"/>
</dbReference>
<dbReference type="PDB" id="6IBM">
    <property type="method" value="X-ray"/>
    <property type="resolution" value="2.07 A"/>
    <property type="chains" value="A/B=32-429"/>
</dbReference>
<dbReference type="PDB" id="6IBR">
    <property type="method" value="X-ray"/>
    <property type="resolution" value="2.02 A"/>
    <property type="chains" value="A/B=32-429"/>
</dbReference>
<dbReference type="PDB" id="6IBT">
    <property type="method" value="X-ray"/>
    <property type="resolution" value="2.04 A"/>
    <property type="chains" value="A/B=32-429"/>
</dbReference>
<dbReference type="PDB" id="8K7D">
    <property type="method" value="X-ray"/>
    <property type="resolution" value="2.61 A"/>
    <property type="chains" value="A/B=32-429"/>
</dbReference>
<dbReference type="PDB" id="8K7E">
    <property type="method" value="X-ray"/>
    <property type="resolution" value="2.20 A"/>
    <property type="chains" value="A/B=32-429"/>
</dbReference>
<dbReference type="PDB" id="8K7F">
    <property type="method" value="X-ray"/>
    <property type="resolution" value="1.98 A"/>
    <property type="chains" value="A/B=32-429"/>
</dbReference>
<dbReference type="PDB" id="8K7G">
    <property type="method" value="X-ray"/>
    <property type="resolution" value="2.32 A"/>
    <property type="chains" value="A/B=32-429"/>
</dbReference>
<dbReference type="PDB" id="8K7H">
    <property type="method" value="X-ray"/>
    <property type="resolution" value="2.28 A"/>
    <property type="chains" value="A/B=32-429"/>
</dbReference>
<dbReference type="PDB" id="8K7I">
    <property type="method" value="X-ray"/>
    <property type="resolution" value="2.12 A"/>
    <property type="chains" value="A/B=32-429"/>
</dbReference>
<dbReference type="PDB" id="8K7J">
    <property type="method" value="X-ray"/>
    <property type="resolution" value="2.01 A"/>
    <property type="chains" value="A/B=32-429"/>
</dbReference>
<dbReference type="PDB" id="8K7K">
    <property type="method" value="X-ray"/>
    <property type="resolution" value="2.00 A"/>
    <property type="chains" value="A/B=32-429"/>
</dbReference>
<dbReference type="PDB" id="8K7L">
    <property type="method" value="X-ray"/>
    <property type="resolution" value="2.00 A"/>
    <property type="chains" value="A/B=32-429"/>
</dbReference>
<dbReference type="PDB" id="9AVS">
    <property type="method" value="X-ray"/>
    <property type="resolution" value="3.53 A"/>
    <property type="chains" value="A/B=32-429"/>
</dbReference>
<dbReference type="PDBsum" id="1R46"/>
<dbReference type="PDBsum" id="1R47"/>
<dbReference type="PDBsum" id="3GXN"/>
<dbReference type="PDBsum" id="3GXP"/>
<dbReference type="PDBsum" id="3GXT"/>
<dbReference type="PDBsum" id="3HG2"/>
<dbReference type="PDBsum" id="3HG3"/>
<dbReference type="PDBsum" id="3HG4"/>
<dbReference type="PDBsum" id="3HG5"/>
<dbReference type="PDBsum" id="3LX9"/>
<dbReference type="PDBsum" id="3LXA"/>
<dbReference type="PDBsum" id="3LXB"/>
<dbReference type="PDBsum" id="3LXC"/>
<dbReference type="PDBsum" id="3S5Y"/>
<dbReference type="PDBsum" id="3S5Z"/>
<dbReference type="PDBsum" id="3TV8"/>
<dbReference type="PDBsum" id="4NXS"/>
<dbReference type="PDBsum" id="6IBK"/>
<dbReference type="PDBsum" id="6IBM"/>
<dbReference type="PDBsum" id="6IBR"/>
<dbReference type="PDBsum" id="6IBT"/>
<dbReference type="PDBsum" id="8K7D"/>
<dbReference type="PDBsum" id="8K7E"/>
<dbReference type="PDBsum" id="8K7F"/>
<dbReference type="PDBsum" id="8K7G"/>
<dbReference type="PDBsum" id="8K7H"/>
<dbReference type="PDBsum" id="8K7I"/>
<dbReference type="PDBsum" id="8K7J"/>
<dbReference type="PDBsum" id="8K7K"/>
<dbReference type="PDBsum" id="8K7L"/>
<dbReference type="PDBsum" id="9AVS"/>
<dbReference type="SMR" id="P06280"/>
<dbReference type="BioGRID" id="108981">
    <property type="interactions" value="67"/>
</dbReference>
<dbReference type="CORUM" id="P06280"/>
<dbReference type="FunCoup" id="P06280">
    <property type="interactions" value="1248"/>
</dbReference>
<dbReference type="IntAct" id="P06280">
    <property type="interactions" value="35"/>
</dbReference>
<dbReference type="STRING" id="9606.ENSP00000218516"/>
<dbReference type="BindingDB" id="P06280"/>
<dbReference type="ChEMBL" id="CHEMBL2524"/>
<dbReference type="DrugBank" id="DB04658">
    <property type="generic name" value="Calystegine B2"/>
</dbReference>
<dbReference type="DrugBank" id="DB05018">
    <property type="generic name" value="Migalastat"/>
</dbReference>
<dbReference type="DrugBank" id="DB14992">
    <property type="generic name" value="Pegunigalsidase alfa"/>
</dbReference>
<dbReference type="DrugCentral" id="P06280"/>
<dbReference type="SwissLipids" id="SLP:000001380"/>
<dbReference type="Allergome" id="9621">
    <property type="allergen name" value="Hom s alpha-Galactosidase"/>
</dbReference>
<dbReference type="CAZy" id="GH27">
    <property type="family name" value="Glycoside Hydrolase Family 27"/>
</dbReference>
<dbReference type="GlyConnect" id="1005">
    <property type="glycosylation" value="19 N-Linked glycans (3 sites)"/>
</dbReference>
<dbReference type="GlyCosmos" id="P06280">
    <property type="glycosylation" value="3 sites, 18 glycans"/>
</dbReference>
<dbReference type="GlyGen" id="P06280">
    <property type="glycosylation" value="5 sites, 43 N-linked glycans (3 sites), 1 O-linked glycan (1 site)"/>
</dbReference>
<dbReference type="iPTMnet" id="P06280"/>
<dbReference type="PhosphoSitePlus" id="P06280"/>
<dbReference type="BioMuta" id="GLA"/>
<dbReference type="jPOST" id="P06280"/>
<dbReference type="MassIVE" id="P06280"/>
<dbReference type="PaxDb" id="9606-ENSP00000218516"/>
<dbReference type="PeptideAtlas" id="P06280"/>
<dbReference type="ProteomicsDB" id="51881"/>
<dbReference type="Pumba" id="P06280"/>
<dbReference type="Antibodypedia" id="377">
    <property type="antibodies" value="442 antibodies from 34 providers"/>
</dbReference>
<dbReference type="DNASU" id="2717"/>
<dbReference type="Ensembl" id="ENST00000218516.4">
    <property type="protein sequence ID" value="ENSP00000218516.4"/>
    <property type="gene ID" value="ENSG00000102393.15"/>
</dbReference>
<dbReference type="GeneID" id="2717"/>
<dbReference type="KEGG" id="hsa:2717"/>
<dbReference type="MANE-Select" id="ENST00000218516.4">
    <property type="protein sequence ID" value="ENSP00000218516.4"/>
    <property type="RefSeq nucleotide sequence ID" value="NM_000169.3"/>
    <property type="RefSeq protein sequence ID" value="NP_000160.1"/>
</dbReference>
<dbReference type="AGR" id="HGNC:4296"/>
<dbReference type="CTD" id="2717"/>
<dbReference type="DisGeNET" id="2717"/>
<dbReference type="GeneCards" id="GLA"/>
<dbReference type="GeneReviews" id="GLA"/>
<dbReference type="HGNC" id="HGNC:4296">
    <property type="gene designation" value="GLA"/>
</dbReference>
<dbReference type="HPA" id="ENSG00000102393">
    <property type="expression patterns" value="Low tissue specificity"/>
</dbReference>
<dbReference type="MalaCards" id="GLA"/>
<dbReference type="MIM" id="300644">
    <property type="type" value="gene"/>
</dbReference>
<dbReference type="MIM" id="301500">
    <property type="type" value="phenotype"/>
</dbReference>
<dbReference type="neXtProt" id="NX_P06280"/>
<dbReference type="OpenTargets" id="ENSG00000102393"/>
<dbReference type="Orphanet" id="324">
    <property type="disease" value="Fabry disease"/>
</dbReference>
<dbReference type="PharmGKB" id="PA28707"/>
<dbReference type="VEuPathDB" id="HostDB:ENSG00000102393"/>
<dbReference type="eggNOG" id="KOG2366">
    <property type="taxonomic scope" value="Eukaryota"/>
</dbReference>
<dbReference type="GeneTree" id="ENSGT00390000008751"/>
<dbReference type="HOGENOM" id="CLU_013093_0_0_1"/>
<dbReference type="InParanoid" id="P06280"/>
<dbReference type="OMA" id="MTPTMGW"/>
<dbReference type="OrthoDB" id="5795902at2759"/>
<dbReference type="PAN-GO" id="P06280">
    <property type="GO annotations" value="5 GO annotations based on evolutionary models"/>
</dbReference>
<dbReference type="PhylomeDB" id="P06280"/>
<dbReference type="TreeFam" id="TF312909"/>
<dbReference type="BioCyc" id="MetaCyc:HS02389-MONOMER"/>
<dbReference type="BRENDA" id="3.2.1.22">
    <property type="organism ID" value="2681"/>
</dbReference>
<dbReference type="PathwayCommons" id="P06280"/>
<dbReference type="Reactome" id="R-HSA-6798695">
    <property type="pathway name" value="Neutrophil degranulation"/>
</dbReference>
<dbReference type="Reactome" id="R-HSA-9840310">
    <property type="pathway name" value="Glycosphingolipid catabolism"/>
</dbReference>
<dbReference type="SABIO-RK" id="P06280"/>
<dbReference type="SignaLink" id="P06280"/>
<dbReference type="SIGNOR" id="P06280"/>
<dbReference type="BioGRID-ORCS" id="2717">
    <property type="hits" value="7 hits in 784 CRISPR screens"/>
</dbReference>
<dbReference type="ChiTaRS" id="GLA">
    <property type="organism name" value="human"/>
</dbReference>
<dbReference type="EvolutionaryTrace" id="P06280"/>
<dbReference type="GeneWiki" id="Alpha-galactosidase"/>
<dbReference type="GenomeRNAi" id="2717"/>
<dbReference type="Pharos" id="P06280">
    <property type="development level" value="Tclin"/>
</dbReference>
<dbReference type="PRO" id="PR:P06280"/>
<dbReference type="Proteomes" id="UP000005640">
    <property type="component" value="Chromosome X"/>
</dbReference>
<dbReference type="RNAct" id="P06280">
    <property type="molecule type" value="protein"/>
</dbReference>
<dbReference type="Bgee" id="ENSG00000102393">
    <property type="expression patterns" value="Expressed in pancreatic ductal cell and 177 other cell types or tissues"/>
</dbReference>
<dbReference type="ExpressionAtlas" id="P06280">
    <property type="expression patterns" value="baseline and differential"/>
</dbReference>
<dbReference type="GO" id="GO:0035578">
    <property type="term" value="C:azurophil granule lumen"/>
    <property type="evidence" value="ECO:0000304"/>
    <property type="project" value="Reactome"/>
</dbReference>
<dbReference type="GO" id="GO:0005737">
    <property type="term" value="C:cytoplasm"/>
    <property type="evidence" value="ECO:0000315"/>
    <property type="project" value="UniProtKB"/>
</dbReference>
<dbReference type="GO" id="GO:0070062">
    <property type="term" value="C:extracellular exosome"/>
    <property type="evidence" value="ECO:0007005"/>
    <property type="project" value="UniProtKB"/>
</dbReference>
<dbReference type="GO" id="GO:0005576">
    <property type="term" value="C:extracellular region"/>
    <property type="evidence" value="ECO:0000314"/>
    <property type="project" value="UniProtKB"/>
</dbReference>
<dbReference type="GO" id="GO:0005794">
    <property type="term" value="C:Golgi apparatus"/>
    <property type="evidence" value="ECO:0000315"/>
    <property type="project" value="UniProtKB"/>
</dbReference>
<dbReference type="GO" id="GO:0043202">
    <property type="term" value="C:lysosomal lumen"/>
    <property type="evidence" value="ECO:0000304"/>
    <property type="project" value="Reactome"/>
</dbReference>
<dbReference type="GO" id="GO:0005764">
    <property type="term" value="C:lysosome"/>
    <property type="evidence" value="ECO:0000315"/>
    <property type="project" value="UniProtKB"/>
</dbReference>
<dbReference type="GO" id="GO:0016020">
    <property type="term" value="C:membrane"/>
    <property type="evidence" value="ECO:0007669"/>
    <property type="project" value="GOC"/>
</dbReference>
<dbReference type="GO" id="GO:0004557">
    <property type="term" value="F:alpha-galactosidase activity"/>
    <property type="evidence" value="ECO:0000314"/>
    <property type="project" value="UniProtKB"/>
</dbReference>
<dbReference type="GO" id="GO:0003824">
    <property type="term" value="F:catalytic activity"/>
    <property type="evidence" value="ECO:0000314"/>
    <property type="project" value="UniProtKB"/>
</dbReference>
<dbReference type="GO" id="GO:0016787">
    <property type="term" value="F:hydrolase activity"/>
    <property type="evidence" value="ECO:0000304"/>
    <property type="project" value="UniProtKB"/>
</dbReference>
<dbReference type="GO" id="GO:0042803">
    <property type="term" value="F:protein homodimerization activity"/>
    <property type="evidence" value="ECO:0000314"/>
    <property type="project" value="UniProtKB"/>
</dbReference>
<dbReference type="GO" id="GO:0005102">
    <property type="term" value="F:signaling receptor binding"/>
    <property type="evidence" value="ECO:0000314"/>
    <property type="project" value="UniProtKB"/>
</dbReference>
<dbReference type="GO" id="GO:0016139">
    <property type="term" value="P:glycoside catabolic process"/>
    <property type="evidence" value="ECO:0000318"/>
    <property type="project" value="GO_Central"/>
</dbReference>
<dbReference type="GO" id="GO:0046479">
    <property type="term" value="P:glycosphingolipid catabolic process"/>
    <property type="evidence" value="ECO:0000314"/>
    <property type="project" value="UniProtKB"/>
</dbReference>
<dbReference type="GO" id="GO:0046477">
    <property type="term" value="P:glycosylceramide catabolic process"/>
    <property type="evidence" value="ECO:0000250"/>
    <property type="project" value="UniProtKB"/>
</dbReference>
<dbReference type="GO" id="GO:0045019">
    <property type="term" value="P:negative regulation of nitric oxide biosynthetic process"/>
    <property type="evidence" value="ECO:0000250"/>
    <property type="project" value="UniProtKB"/>
</dbReference>
<dbReference type="GO" id="GO:0051001">
    <property type="term" value="P:negative regulation of nitric-oxide synthase activity"/>
    <property type="evidence" value="ECO:0000250"/>
    <property type="project" value="UniProtKB"/>
</dbReference>
<dbReference type="GO" id="GO:0009311">
    <property type="term" value="P:oligosaccharide metabolic process"/>
    <property type="evidence" value="ECO:0000314"/>
    <property type="project" value="UniProtKB"/>
</dbReference>
<dbReference type="CDD" id="cd14792">
    <property type="entry name" value="GH27"/>
    <property type="match status" value="1"/>
</dbReference>
<dbReference type="FunFam" id="3.20.20.70:FF:000070">
    <property type="entry name" value="Alpha-galactosidase"/>
    <property type="match status" value="1"/>
</dbReference>
<dbReference type="FunFam" id="2.60.40.1180:FF:000017">
    <property type="entry name" value="Alpha-galactosidase A"/>
    <property type="match status" value="1"/>
</dbReference>
<dbReference type="Gene3D" id="3.20.20.70">
    <property type="entry name" value="Aldolase class I"/>
    <property type="match status" value="1"/>
</dbReference>
<dbReference type="Gene3D" id="2.60.40.1180">
    <property type="entry name" value="Golgi alpha-mannosidase II"/>
    <property type="match status" value="1"/>
</dbReference>
<dbReference type="InterPro" id="IPR013785">
    <property type="entry name" value="Aldolase_TIM"/>
</dbReference>
<dbReference type="InterPro" id="IPR002241">
    <property type="entry name" value="Glyco_hydro_27"/>
</dbReference>
<dbReference type="InterPro" id="IPR000111">
    <property type="entry name" value="Glyco_hydro_27/36_CS"/>
</dbReference>
<dbReference type="InterPro" id="IPR013780">
    <property type="entry name" value="Glyco_hydro_b"/>
</dbReference>
<dbReference type="InterPro" id="IPR017853">
    <property type="entry name" value="Glycoside_hydrolase_SF"/>
</dbReference>
<dbReference type="InterPro" id="IPR035373">
    <property type="entry name" value="Melibiase/NAGA_C"/>
</dbReference>
<dbReference type="PANTHER" id="PTHR11452:SF14">
    <property type="entry name" value="ALPHA-GALACTOSIDASE A"/>
    <property type="match status" value="1"/>
</dbReference>
<dbReference type="PANTHER" id="PTHR11452">
    <property type="entry name" value="ALPHA-GALACTOSIDASE/ALPHA-N-ACETYLGALACTOSAMINIDASE"/>
    <property type="match status" value="1"/>
</dbReference>
<dbReference type="Pfam" id="PF16499">
    <property type="entry name" value="Melibiase_2"/>
    <property type="match status" value="1"/>
</dbReference>
<dbReference type="Pfam" id="PF17450">
    <property type="entry name" value="Melibiase_2_C"/>
    <property type="match status" value="1"/>
</dbReference>
<dbReference type="PRINTS" id="PR00740">
    <property type="entry name" value="GLHYDRLASE27"/>
</dbReference>
<dbReference type="SUPFAM" id="SSF51445">
    <property type="entry name" value="(Trans)glycosidases"/>
    <property type="match status" value="1"/>
</dbReference>
<dbReference type="SUPFAM" id="SSF51011">
    <property type="entry name" value="Glycosyl hydrolase domain"/>
    <property type="match status" value="1"/>
</dbReference>
<dbReference type="PROSITE" id="PS00512">
    <property type="entry name" value="ALPHA_GALACTOSIDASE"/>
    <property type="match status" value="1"/>
</dbReference>
<gene>
    <name evidence="52" type="primary">GLA</name>
</gene>
<evidence type="ECO:0000250" key="1"/>
<evidence type="ECO:0000269" key="2">
    <source>
    </source>
</evidence>
<evidence type="ECO:0000269" key="3">
    <source>
    </source>
</evidence>
<evidence type="ECO:0000269" key="4">
    <source>
    </source>
</evidence>
<evidence type="ECO:0000269" key="5">
    <source>
    </source>
</evidence>
<evidence type="ECO:0000269" key="6">
    <source>
    </source>
</evidence>
<evidence type="ECO:0000269" key="7">
    <source>
    </source>
</evidence>
<evidence type="ECO:0000269" key="8">
    <source>
    </source>
</evidence>
<evidence type="ECO:0000269" key="9">
    <source>
    </source>
</evidence>
<evidence type="ECO:0000269" key="10">
    <source>
    </source>
</evidence>
<evidence type="ECO:0000269" key="11">
    <source>
    </source>
</evidence>
<evidence type="ECO:0000269" key="12">
    <source>
    </source>
</evidence>
<evidence type="ECO:0000269" key="13">
    <source>
    </source>
</evidence>
<evidence type="ECO:0000269" key="14">
    <source>
    </source>
</evidence>
<evidence type="ECO:0000269" key="15">
    <source>
    </source>
</evidence>
<evidence type="ECO:0000269" key="16">
    <source>
    </source>
</evidence>
<evidence type="ECO:0000269" key="17">
    <source>
    </source>
</evidence>
<evidence type="ECO:0000269" key="18">
    <source>
    </source>
</evidence>
<evidence type="ECO:0000269" key="19">
    <source>
    </source>
</evidence>
<evidence type="ECO:0000269" key="20">
    <source>
    </source>
</evidence>
<evidence type="ECO:0000269" key="21">
    <source>
    </source>
</evidence>
<evidence type="ECO:0000269" key="22">
    <source>
    </source>
</evidence>
<evidence type="ECO:0000269" key="23">
    <source>
    </source>
</evidence>
<evidence type="ECO:0000269" key="24">
    <source>
    </source>
</evidence>
<evidence type="ECO:0000269" key="25">
    <source>
    </source>
</evidence>
<evidence type="ECO:0000269" key="26">
    <source>
    </source>
</evidence>
<evidence type="ECO:0000269" key="27">
    <source>
    </source>
</evidence>
<evidence type="ECO:0000269" key="28">
    <source>
    </source>
</evidence>
<evidence type="ECO:0000269" key="29">
    <source>
    </source>
</evidence>
<evidence type="ECO:0000269" key="30">
    <source>
    </source>
</evidence>
<evidence type="ECO:0000269" key="31">
    <source>
    </source>
</evidence>
<evidence type="ECO:0000269" key="32">
    <source>
    </source>
</evidence>
<evidence type="ECO:0000269" key="33">
    <source>
    </source>
</evidence>
<evidence type="ECO:0000269" key="34">
    <source>
    </source>
</evidence>
<evidence type="ECO:0000269" key="35">
    <source>
    </source>
</evidence>
<evidence type="ECO:0000269" key="36">
    <source>
    </source>
</evidence>
<evidence type="ECO:0000269" key="37">
    <source>
    </source>
</evidence>
<evidence type="ECO:0000269" key="38">
    <source>
    </source>
</evidence>
<evidence type="ECO:0000269" key="39">
    <source>
    </source>
</evidence>
<evidence type="ECO:0000269" key="40">
    <source>
    </source>
</evidence>
<evidence type="ECO:0000269" key="41">
    <source>
    </source>
</evidence>
<evidence type="ECO:0000269" key="42">
    <source>
    </source>
</evidence>
<evidence type="ECO:0000269" key="43">
    <source>
    </source>
</evidence>
<evidence type="ECO:0000269" key="44">
    <source>
    </source>
</evidence>
<evidence type="ECO:0000269" key="45">
    <source>
    </source>
</evidence>
<evidence type="ECO:0000269" key="46">
    <source>
    </source>
</evidence>
<evidence type="ECO:0000269" key="47">
    <source>
    </source>
</evidence>
<evidence type="ECO:0000269" key="48">
    <source>
    </source>
</evidence>
<evidence type="ECO:0000305" key="49"/>
<evidence type="ECO:0000305" key="50">
    <source>
    </source>
</evidence>
<evidence type="ECO:0000305" key="51">
    <source>
    </source>
</evidence>
<evidence type="ECO:0000312" key="52">
    <source>
        <dbReference type="HGNC" id="HGNC:4296"/>
    </source>
</evidence>
<evidence type="ECO:0007829" key="53">
    <source>
        <dbReference type="PDB" id="1R47"/>
    </source>
</evidence>
<evidence type="ECO:0007829" key="54">
    <source>
        <dbReference type="PDB" id="3GXT"/>
    </source>
</evidence>
<evidence type="ECO:0007829" key="55">
    <source>
        <dbReference type="PDB" id="3HG3"/>
    </source>
</evidence>
<evidence type="ECO:0007829" key="56">
    <source>
        <dbReference type="PDB" id="6IBT"/>
    </source>
</evidence>
<evidence type="ECO:0007829" key="57">
    <source>
        <dbReference type="PDB" id="8K7F"/>
    </source>
</evidence>
<feature type="signal peptide">
    <location>
        <begin position="1"/>
        <end position="31"/>
    </location>
</feature>
<feature type="chain" id="PRO_0000001004" description="Alpha-galactosidase A">
    <location>
        <begin position="32"/>
        <end position="429"/>
    </location>
</feature>
<feature type="active site" description="Nucleophile" evidence="1">
    <location>
        <position position="170"/>
    </location>
</feature>
<feature type="active site" description="Proton donor" evidence="1">
    <location>
        <position position="231"/>
    </location>
</feature>
<feature type="binding site">
    <location>
        <begin position="203"/>
        <end position="207"/>
    </location>
    <ligand>
        <name>substrate</name>
    </ligand>
</feature>
<feature type="glycosylation site" description="N-linked (GlcNAc...) asparagine" evidence="14">
    <location>
        <position position="139"/>
    </location>
</feature>
<feature type="glycosylation site" description="N-linked (GlcNAc...) asparagine" evidence="14">
    <location>
        <position position="192"/>
    </location>
</feature>
<feature type="glycosylation site" description="N-linked (GlcNAc...) asparagine" evidence="14 19">
    <location>
        <position position="215"/>
    </location>
</feature>
<feature type="disulfide bond">
    <location>
        <begin position="52"/>
        <end position="94"/>
    </location>
</feature>
<feature type="disulfide bond">
    <location>
        <begin position="56"/>
        <end position="63"/>
    </location>
</feature>
<feature type="disulfide bond">
    <location>
        <begin position="142"/>
        <end position="172"/>
    </location>
</feature>
<feature type="disulfide bond">
    <location>
        <begin position="202"/>
        <end position="223"/>
    </location>
</feature>
<feature type="disulfide bond">
    <location>
        <begin position="378"/>
        <end position="382"/>
    </location>
</feature>
<feature type="sequence variant" id="VAR_077365" description="Does not affect enzyme activity; dbSNP:rs150547672." evidence="24">
    <original>L</original>
    <variation>P</variation>
    <location>
        <position position="3"/>
    </location>
</feature>
<feature type="sequence variant" id="VAR_077366" description="Does not affect enzyme activity; dbSNP:rs869312133." evidence="24">
    <original>L</original>
    <variation>V</variation>
    <location>
        <position position="3"/>
    </location>
</feature>
<feature type="sequence variant" id="VAR_062550" description="In FD; has 4% of wild-type activity." evidence="20">
    <location>
        <begin position="12"/>
        <end position="14"/>
    </location>
</feature>
<feature type="sequence variant" id="VAR_077367" description="In FD; loss of enzyme activity; dbSNP:rs869312134." evidence="24">
    <original>A</original>
    <variation>D</variation>
    <location>
        <position position="20"/>
    </location>
</feature>
<feature type="sequence variant" id="VAR_012362" description="In FD; atypical; loss of enzyme activity; dbSNP:rs104894847." evidence="24 31 44">
    <original>A</original>
    <variation>P</variation>
    <location>
        <position position="20"/>
    </location>
</feature>
<feature type="sequence variant" id="VAR_077368" description="In FD; loss of enzyme activity; dbSNP:rs869312135." evidence="24">
    <original>L</original>
    <variation>P</variation>
    <location>
        <position position="21"/>
    </location>
</feature>
<feature type="sequence variant" id="VAR_012363" description="In FD; dbSNP:rs869312448." evidence="16 43">
    <original>A</original>
    <variation>V</variation>
    <location>
        <position position="31"/>
    </location>
</feature>
<feature type="sequence variant" id="VAR_000431" description="In FD; dbSNP:rs1569306168." evidence="32">
    <original>L</original>
    <variation>P</variation>
    <location>
        <position position="32"/>
    </location>
</feature>
<feature type="sequence variant" id="VAR_077369" description="In FD; uncertain significance; decreased enzyme activity; dbSNP:rs869312136." evidence="24">
    <original>D</original>
    <variation>G</variation>
    <location>
        <position position="33"/>
    </location>
</feature>
<feature type="sequence variant" id="VAR_000432" description="In FD; dbSNP:rs104894835." evidence="28 32 35">
    <original>N</original>
    <variation>S</variation>
    <location>
        <position position="34"/>
    </location>
</feature>
<feature type="sequence variant" id="VAR_077370" description="In FD; uncertain significance; decreased enzyme activity; dbSNP:rs869312137." evidence="24">
    <original>G</original>
    <variation>E</variation>
    <location>
        <position position="35"/>
    </location>
</feature>
<feature type="sequence variant" id="VAR_000433" description="In FD." evidence="34">
    <original>G</original>
    <variation>R</variation>
    <location>
        <position position="35"/>
    </location>
</feature>
<feature type="sequence variant" id="VAR_077371" description="In FD; loss of enzyme activity; dbSNP:rs869312138." evidence="24">
    <original>L</original>
    <variation>W</variation>
    <location>
        <position position="36"/>
    </location>
</feature>
<feature type="sequence variant" id="VAR_012364" description="In FD; dbSNP:rs398123199." evidence="6">
    <original>P</original>
    <variation>L</variation>
    <location>
        <position position="40"/>
    </location>
</feature>
<feature type="sequence variant" id="VAR_000434" description="In FD; loss of enzyme activity; dbSNP:rs104894831." evidence="21 24 44 47">
    <original>P</original>
    <variation>S</variation>
    <location>
        <position position="40"/>
    </location>
</feature>
<feature type="sequence variant" id="VAR_062551" description="In FD; dbSNP:rs797044613." evidence="16">
    <original>M</original>
    <variation>L</variation>
    <location>
        <position position="42"/>
    </location>
</feature>
<feature type="sequence variant" id="VAR_077372" description="In FD; loss of enzyme activity; dbSNP:rs398123201." evidence="24">
    <original>M</original>
    <variation>T</variation>
    <location>
        <position position="42"/>
    </location>
</feature>
<feature type="sequence variant" id="VAR_012365" description="In FD; dbSNP:rs797044613." evidence="4 41">
    <original>M</original>
    <variation>V</variation>
    <location>
        <position position="42"/>
    </location>
</feature>
<feature type="sequence variant" id="VAR_062552" description="In FD; dbSNP:rs886044906." evidence="16">
    <original>G</original>
    <variation>R</variation>
    <location>
        <position position="43"/>
    </location>
</feature>
<feature type="sequence variant" id="VAR_012366" description="In FD." evidence="43">
    <original>LH</original>
    <variation>RS</variation>
    <location>
        <begin position="45"/>
        <end position="46"/>
    </location>
</feature>
<feature type="sequence variant" id="VAR_077373" description="In FD; loss of enzyme activity." evidence="24">
    <original>L</original>
    <variation>P</variation>
    <location>
        <position position="45"/>
    </location>
</feature>
<feature type="sequence variant" id="VAR_062553" description="In FD; has 36% of wild-type activity." evidence="20">
    <original>H</original>
    <variation>P</variation>
    <location>
        <position position="46"/>
    </location>
</feature>
<feature type="sequence variant" id="VAR_012367" description="In FD; dbSNP:rs398123203." evidence="43">
    <original>H</original>
    <variation>R</variation>
    <location>
        <position position="46"/>
    </location>
</feature>
<feature type="sequence variant" id="VAR_012368" description="In FD; dbSNP:rs1928582757." evidence="9">
    <original>H</original>
    <variation>Y</variation>
    <location>
        <position position="46"/>
    </location>
</feature>
<feature type="sequence variant" id="VAR_012369" description="In FD; decreased alpha-galactosidase activity." evidence="9 26">
    <original>W</original>
    <variation>G</variation>
    <location>
        <position position="47"/>
    </location>
</feature>
<feature type="sequence variant" id="VAR_076478" description="In FD; decreased alpha-galactosidase activity." evidence="26">
    <original>W</original>
    <variation>R</variation>
    <location>
        <position position="47"/>
    </location>
</feature>
<feature type="sequence variant" id="VAR_077374" description="In FD; loss of enzyme activity; dbSNP:rs869312254." evidence="24">
    <original>E</original>
    <variation>D</variation>
    <location>
        <position position="48"/>
    </location>
</feature>
<feature type="sequence variant" id="VAR_000435" description="In FD." evidence="34">
    <original>R</original>
    <variation>L</variation>
    <location>
        <position position="49"/>
    </location>
</feature>
<feature type="sequence variant" id="VAR_012370" description="In FD; dbSNP:rs398123205." evidence="9">
    <original>R</original>
    <variation>P</variation>
    <location>
        <position position="49"/>
    </location>
</feature>
<feature type="sequence variant" id="VAR_012371" description="In FD." evidence="41">
    <original>R</original>
    <variation>S</variation>
    <location>
        <position position="49"/>
    </location>
</feature>
<feature type="sequence variant" id="VAR_000436" description="In FD; dbSNP:rs1057521047." evidence="38 42">
    <original>C</original>
    <variation>R</variation>
    <location>
        <position position="52"/>
    </location>
</feature>
<feature type="sequence variant" id="VAR_000437" description="In FD; dbSNP:rs869312256." evidence="29">
    <original>C</original>
    <variation>S</variation>
    <location>
        <position position="52"/>
    </location>
</feature>
<feature type="sequence variant" id="VAR_000438" description="In FD; dbSNP:rs869312258." evidence="29">
    <original>C</original>
    <variation>F</variation>
    <location>
        <position position="56"/>
    </location>
</feature>
<feature type="sequence variant" id="VAR_000439" description="In FD; dbSNP:rs104894836." evidence="28">
    <original>C</original>
    <variation>G</variation>
    <location>
        <position position="56"/>
    </location>
</feature>
<feature type="sequence variant" id="VAR_012372" description="In FD; loss of enzyme activity; dbSNP:rs869312258." evidence="24 41">
    <original>C</original>
    <variation>Y</variation>
    <location>
        <position position="56"/>
    </location>
</feature>
<feature type="sequence variant" id="VAR_000440" description="In FD." evidence="29">
    <original>E</original>
    <variation>K</variation>
    <location>
        <position position="59"/>
    </location>
</feature>
<feature type="sequence variant" id="VAR_077375" description="In FD; uncertain significance; decreased enzyme activity; dbSNP:rs869312262." evidence="24">
    <original>P</original>
    <variation>L</variation>
    <location>
        <position position="60"/>
    </location>
</feature>
<feature type="sequence variant" id="VAR_077376" description="In FD; loss of enzyme activity; dbSNP:rs869312139." evidence="24">
    <original>I</original>
    <variation>F</variation>
    <location>
        <position position="64"/>
    </location>
</feature>
<feature type="sequence variant" id="VAR_032290" description="In FD; does not affect enzyme function; dbSNP:rs104894848." evidence="12 48">
    <original>S</original>
    <variation>T</variation>
    <location>
        <position position="65"/>
    </location>
</feature>
<feature type="sequence variant" id="VAR_000441" description="In FD; has 52% of wild-type activity; dbSNP:rs104894833." evidence="13 20 30 44">
    <original>E</original>
    <variation>Q</variation>
    <location>
        <position position="66"/>
    </location>
</feature>
<feature type="sequence variant" id="VAR_077377" description="Does not affect enzyme activity; dbSNP:rs781927744." evidence="24">
    <original>E</original>
    <variation>G</variation>
    <location>
        <position position="71"/>
    </location>
</feature>
<feature type="sequence variant" id="VAR_000442" description="In FD; atypical." evidence="44 46">
    <original>M</original>
    <variation>V</variation>
    <location>
        <position position="72"/>
    </location>
</feature>
<feature type="sequence variant" id="VAR_077378" description="In FD; uncertain significance; decreased enzyme activity; dbSNP:rs781838005." evidence="24">
    <original>G</original>
    <variation>D</variation>
    <location>
        <position position="80"/>
    </location>
</feature>
<feature type="sequence variant" id="VAR_000443" description="In FD; dbSNP:rs1569304898." evidence="32">
    <original>G</original>
    <variation>D</variation>
    <location>
        <position position="85"/>
    </location>
</feature>
<feature type="sequence variant" id="VAR_012373" description="In FD." evidence="43">
    <original>Y</original>
    <variation>C</variation>
    <location>
        <position position="86"/>
    </location>
</feature>
<feature type="sequence variant" id="VAR_077379" description="In FD; loss of enzyme activity; dbSNP:rs869312140." evidence="24">
    <original>Y</original>
    <variation>H</variation>
    <location>
        <position position="86"/>
    </location>
</feature>
<feature type="sequence variant" id="VAR_012374" description="In FD." evidence="43">
    <original>L</original>
    <variation>P</variation>
    <location>
        <position position="89"/>
    </location>
</feature>
<feature type="sequence variant" id="VAR_000444" description="In FD; dbSNP:rs1569304886." evidence="29">
    <original>L</original>
    <variation>R</variation>
    <location>
        <position position="89"/>
    </location>
</feature>
<feature type="sequence variant" id="VAR_077380" description="In FD; loss of enzyme activity; dbSNP:rs869312141." evidence="24">
    <original>I</original>
    <variation>N</variation>
    <location>
        <position position="91"/>
    </location>
</feature>
<feature type="sequence variant" id="VAR_012375" description="In FD; mild; loss of enzyme activity; dbSNP:rs869312141." evidence="24 43">
    <original>I</original>
    <variation>T</variation>
    <location>
        <position position="91"/>
    </location>
</feature>
<feature type="sequence variant" id="VAR_012376" description="In FD; dbSNP:rs886041315." evidence="41">
    <original>D</original>
    <variation>H</variation>
    <location>
        <position position="92"/>
    </location>
</feature>
<feature type="sequence variant" id="VAR_012377" description="In FD; dbSNP:rs886041315." evidence="43">
    <original>D</original>
    <variation>Y</variation>
    <location>
        <position position="92"/>
    </location>
</feature>
<feature type="sequence variant" id="VAR_012378" description="In FD." evidence="41">
    <original>D</original>
    <variation>G</variation>
    <location>
        <position position="93"/>
    </location>
</feature>
<feature type="sequence variant" id="VAR_062554" description="In FD; has no enzyme activity; dbSNP:rs869312270." evidence="16 20">
    <original>D</original>
    <variation>N</variation>
    <location>
        <position position="93"/>
    </location>
</feature>
<feature type="sequence variant" id="VAR_012379" description="In FD; loss of enzyme activity; dbSNP:rs2147480697." evidence="9 24">
    <original>C</original>
    <variation>S</variation>
    <location>
        <position position="94"/>
    </location>
</feature>
<feature type="sequence variant" id="VAR_012380" description="In FD; loss of enzyme activity; dbSNP:rs113173389." evidence="24 43">
    <original>C</original>
    <variation>Y</variation>
    <location>
        <position position="94"/>
    </location>
</feature>
<feature type="sequence variant" id="VAR_012381" description="In FD." evidence="6 9">
    <original>W</original>
    <variation>S</variation>
    <location>
        <position position="95"/>
    </location>
</feature>
<feature type="sequence variant" id="VAR_012382" description="In FD; dbSNP:rs1569304867." evidence="43">
    <original>A</original>
    <variation>V</variation>
    <location>
        <position position="97"/>
    </location>
</feature>
<feature type="sequence variant" id="VAR_000445" description="In FD; dbSNP:rs869312273." evidence="29">
    <original>R</original>
    <variation>K</variation>
    <location>
        <position position="100"/>
    </location>
</feature>
<feature type="sequence variant" id="VAR_012383" description="In FD." evidence="43">
    <original>R</original>
    <variation>T</variation>
    <location>
        <position position="100"/>
    </location>
</feature>
<feature type="sequence variant" id="VAR_000446" description="In FD.">
    <location>
        <begin position="112"/>
        <end position="117"/>
    </location>
</feature>
<feature type="sequence variant" id="VAR_000447" description="In FD; dbSNP:rs104894834." evidence="4 6 9 13 16 30 44">
    <original>R</original>
    <variation>C</variation>
    <location>
        <position position="112"/>
    </location>
</feature>
<feature type="sequence variant" id="VAR_000448" description="In FD; mild; dbSNP:rs372966991." evidence="6 16 29">
    <original>R</original>
    <variation>H</variation>
    <location>
        <position position="112"/>
    </location>
</feature>
<feature type="sequence variant" id="VAR_062555" description="In FD; dbSNP:rs104894834." evidence="16">
    <original>R</original>
    <variation>S</variation>
    <location>
        <position position="112"/>
    </location>
</feature>
<feature type="sequence variant" id="VAR_077381" description="In FD; uncertain significance; decreased enzyme activity; dbSNP:rs869312142." evidence="24">
    <original>F</original>
    <variation>I</variation>
    <location>
        <position position="113"/>
    </location>
</feature>
<feature type="sequence variant" id="VAR_012384" description="In FD; mild; dbSNP:rs869312142." evidence="43">
    <original>F</original>
    <variation>L</variation>
    <location>
        <position position="113"/>
    </location>
</feature>
<feature type="sequence variant" id="VAR_012385" description="In FD; dbSNP:rs2147480502." evidence="9">
    <original>F</original>
    <variation>S</variation>
    <location>
        <position position="113"/>
    </location>
</feature>
<feature type="sequence variant" id="VAR_000449" description="In FD.">
    <original>LA</original>
    <variation>PT</variation>
    <location>
        <begin position="120"/>
        <end position="121"/>
    </location>
</feature>
<feature type="sequence variant" id="VAR_062556" description="In FD; has 42% of wild-type activity." evidence="20">
    <original>L</original>
    <variation>V</variation>
    <location>
        <position position="120"/>
    </location>
</feature>
<feature type="sequence variant" id="VAR_077382" description="In FD; uncertain significance; decreased enzyme activity; dbSNP:rs782197638." evidence="24">
    <original>A</original>
    <variation>T</variation>
    <location>
        <position position="121"/>
    </location>
</feature>
<feature type="sequence variant" id="VAR_000450" description="In FD." evidence="38">
    <original>G</original>
    <variation>E</variation>
    <location>
        <position position="128"/>
    </location>
</feature>
<feature type="sequence variant" id="VAR_000451" description="In FD; dbSNP:rs869312298." evidence="29">
    <original>L</original>
    <variation>P</variation>
    <location>
        <position position="131"/>
    </location>
</feature>
<feature type="sequence variant" id="VAR_012386" description="In FD; dbSNP:rs2147477791." evidence="16 43">
    <original>Y</original>
    <variation>S</variation>
    <location>
        <position position="134"/>
    </location>
</feature>
<feature type="sequence variant" id="VAR_062557" description="In FD; dbSNP:rs1569304221." evidence="16">
    <original>A</original>
    <variation>V</variation>
    <location>
        <position position="135"/>
    </location>
</feature>
<feature type="sequence variant" id="VAR_012387" description="In FD; dbSNP:rs1928326524." evidence="43">
    <original>G</original>
    <variation>R</variation>
    <location>
        <position position="138"/>
    </location>
</feature>
<feature type="sequence variant" id="VAR_012388" description="In FD; dbSNP:rs886044845." evidence="4">
    <original>C</original>
    <variation>R</variation>
    <location>
        <position position="142"/>
    </location>
</feature>
<feature type="sequence variant" id="VAR_000452" description="In FD." evidence="33 44">
    <original>C</original>
    <variation>Y</variation>
    <location>
        <position position="142"/>
    </location>
</feature>
<feature type="sequence variant" id="VAR_000453" description="In FD; dbSNP:rs104894845." evidence="10 29">
    <original>A</original>
    <variation>P</variation>
    <location>
        <position position="143"/>
    </location>
</feature>
<feature type="sequence variant" id="VAR_012389" description="In FD; uncertain significance; dbSNP:rs104894845." evidence="9 17 25 43">
    <original>A</original>
    <variation>T</variation>
    <location>
        <position position="143"/>
    </location>
</feature>
<feature type="sequence variant" id="VAR_000454" description="In FD; dbSNP:rs782085638." evidence="29">
    <original>G</original>
    <variation>V</variation>
    <location>
        <position position="144"/>
    </location>
</feature>
<feature type="sequence variant" id="VAR_000455" description="In FD; mild; dbSNP:rs104894837." evidence="29">
    <original>P</original>
    <variation>S</variation>
    <location>
        <position position="146"/>
    </location>
</feature>
<feature type="sequence variant" id="VAR_012390" description="In FD; dbSNP:rs1555985829." evidence="6">
    <original>S</original>
    <variation>N</variation>
    <location>
        <position position="148"/>
    </location>
</feature>
<feature type="sequence variant" id="VAR_012391" description="In FD; dbSNP:rs1569304190." evidence="4 43">
    <original>S</original>
    <variation>R</variation>
    <location>
        <position position="148"/>
    </location>
</feature>
<feature type="sequence variant" id="VAR_077383" description="Does not affect enzyme activity; dbSNP:rs869312143." evidence="24">
    <original>I</original>
    <variation>T</variation>
    <location>
        <position position="154"/>
    </location>
</feature>
<feature type="sequence variant" id="VAR_000456" description="In FD; dbSNP:rs28935195." evidence="32">
    <original>A</original>
    <variation>T</variation>
    <location>
        <position position="156"/>
    </location>
</feature>
<feature type="sequence variant" id="VAR_000457" description="In FD; dbSNP:rs869312307." evidence="30 33 44">
    <original>A</original>
    <variation>V</variation>
    <location>
        <position position="156"/>
    </location>
</feature>
<feature type="sequence variant" id="VAR_012392" description="In FD; dbSNP:rs869312311." evidence="42">
    <original>W</original>
    <variation>C</variation>
    <location>
        <position position="162"/>
    </location>
</feature>
<feature type="sequence variant" id="VAR_000458" description="In FD; dbSNP:rs28935196." evidence="28">
    <original>W</original>
    <variation>R</variation>
    <location>
        <position position="162"/>
    </location>
</feature>
<feature type="sequence variant" id="VAR_012393" description="In FD." evidence="43">
    <original>G</original>
    <variation>V</variation>
    <location>
        <position position="163"/>
    </location>
</feature>
<feature type="sequence variant" id="VAR_077384" description="In FD; loss of enzyme activity." evidence="24">
    <original>V</original>
    <variation>G</variation>
    <location>
        <position position="164"/>
    </location>
</feature>
<feature type="sequence variant" id="VAR_077385" description="In FD; uncertain significance; decreased enzyme activity; dbSNP:rs869312144." evidence="24">
    <original>V</original>
    <variation>L</variation>
    <location>
        <position position="164"/>
    </location>
</feature>
<feature type="sequence variant" id="VAR_000459" description="In FD." evidence="4 34">
    <original>D</original>
    <variation>V</variation>
    <location>
        <position position="165"/>
    </location>
</feature>
<feature type="sequence variant" id="VAR_000460" description="In FD." evidence="30 33 44">
    <original>L</original>
    <variation>V</variation>
    <location>
        <position position="166"/>
    </location>
</feature>
<feature type="sequence variant" id="VAR_077386" description="In FD; loss of enzyme activity." evidence="24">
    <original>L</original>
    <variation>Q</variation>
    <location>
        <position position="167"/>
    </location>
</feature>
<feature type="sequence variant" id="VAR_012394" description="In FD." evidence="43">
    <original>D</original>
    <variation>V</variation>
    <location>
        <position position="170"/>
    </location>
</feature>
<feature type="sequence variant" id="VAR_062558" description="In FD." evidence="16">
    <original>G</original>
    <variation>D</variation>
    <location>
        <position position="171"/>
    </location>
</feature>
<feature type="sequence variant" id="VAR_012395" description="In FD." evidence="6">
    <original>C</original>
    <variation>R</variation>
    <location>
        <position position="172"/>
    </location>
</feature>
<feature type="sequence variant" id="VAR_000461" description="In FD; dbSNP:rs869312318." evidence="29">
    <original>C</original>
    <variation>Y</variation>
    <location>
        <position position="172"/>
    </location>
</feature>
<feature type="sequence variant" id="VAR_077387" description="In FD; uncertain significance; decreased enzyme activity; dbSNP:rs869312145." evidence="24">
    <original>L</original>
    <variation>F</variation>
    <location>
        <position position="180"/>
    </location>
</feature>
<feature type="sequence variant" id="VAR_012396" description="In FD; dbSNP:rs398123212." evidence="4">
    <original>G</original>
    <variation>D</variation>
    <location>
        <position position="183"/>
    </location>
</feature>
<feature type="sequence variant" id="VAR_077388" description="In FD; loss of enzyme activity; dbSNP:rs869312146." evidence="24">
    <original>M</original>
    <variation>I</variation>
    <location>
        <position position="187"/>
    </location>
</feature>
<feature type="sequence variant" id="VAR_012397" description="In FD; decreased enzyme activity; dbSNP:rs869312340." evidence="6 24">
    <original>M</original>
    <variation>V</variation>
    <location>
        <position position="187"/>
    </location>
</feature>
<feature type="sequence variant" id="VAR_077389" description="In FD; uncertain significance; decreased enzyme activity; dbSNP:rs869312147." evidence="24">
    <original>R</original>
    <variation>S</variation>
    <location>
        <position position="196"/>
    </location>
</feature>
<feature type="sequence variant" id="VAR_077390" description="In FD; uncertain significance; decreased enzyme activity; dbSNP:rs727503950." evidence="24">
    <original>I</original>
    <variation>T</variation>
    <location>
        <position position="198"/>
    </location>
</feature>
<feature type="sequence variant" id="VAR_062559" description="In FD." evidence="16">
    <original>S</original>
    <variation>F</variation>
    <location>
        <position position="201"/>
    </location>
</feature>
<feature type="sequence variant" id="VAR_000462" description="In FD; dbSNP:rs104894838." evidence="3">
    <original>C</original>
    <variation>W</variation>
    <location>
        <position position="202"/>
    </location>
</feature>
<feature type="sequence variant" id="VAR_012398" description="In FD; loss of enzyme activity; dbSNP:rs869312344." evidence="24 43">
    <original>C</original>
    <variation>Y</variation>
    <location>
        <position position="202"/>
    </location>
</feature>
<feature type="sequence variant" id="VAR_077391" description="In FD; loss of enzyme activity; dbSNP:rs869312148." evidence="24">
    <original>W</original>
    <variation>R</variation>
    <location>
        <position position="204"/>
    </location>
</feature>
<feature type="sequence variant" id="VAR_012399" description="In FD." evidence="43">
    <location>
        <begin position="205"/>
        <end position="207"/>
    </location>
</feature>
<feature type="sequence variant" id="VAR_000463" description="In FD; dbSNP:rs397515870." evidence="38 41">
    <original>P</original>
    <variation>T</variation>
    <location>
        <position position="205"/>
    </location>
</feature>
<feature type="sequence variant" id="VAR_077392" description="In FD; uncertain significance; decreased enzyme activity; dbSNP:rs869312149." evidence="24">
    <original>K</original>
    <variation>R</variation>
    <location>
        <position position="213"/>
    </location>
</feature>
<feature type="sequence variant" id="VAR_077393" description="In FD; uncertain significance; decreased enzyme activity; dbSNP:rs869312150." evidence="24">
    <original>P</original>
    <variation>L</variation>
    <location>
        <position position="214"/>
    </location>
</feature>
<feature type="sequence variant" id="VAR_000464" description="In FD; mild; dbSNP:rs28935197." evidence="4 9 16 35 47">
    <original>N</original>
    <variation>S</variation>
    <location>
        <position position="215"/>
    </location>
</feature>
<feature type="sequence variant" id="VAR_012400" description="In FD; dbSNP:rs1928199003." evidence="43">
    <original>Y</original>
    <variation>D</variation>
    <location>
        <position position="216"/>
    </location>
</feature>
<feature type="sequence variant" id="VAR_077394" description="In FD; uncertain significance; decreased enzyme activity; dbSNP:rs869312151." evidence="24">
    <original>I</original>
    <variation>M</variation>
    <location>
        <position position="219"/>
    </location>
</feature>
<feature type="sequence variant" id="VAR_000465" description="In FD." evidence="29">
    <original>I</original>
    <variation>N</variation>
    <location>
        <position position="219"/>
    </location>
</feature>
<feature type="sequence variant" id="VAR_062560" description="In FD; has 46% of wild-type activity; dbSNP:rs2147473404." evidence="20">
    <original>I</original>
    <variation>T</variation>
    <location>
        <position position="219"/>
    </location>
</feature>
<feature type="sequence variant" id="VAR_012401" description="In FD; dbSNP:rs869312381." evidence="3">
    <original>C</original>
    <variation>G</variation>
    <location>
        <position position="223"/>
    </location>
</feature>
<feature type="sequence variant" id="VAR_000466" description="In FD; dbSNP:rs1555985175." evidence="3 47">
    <original>N</original>
    <variation>D</variation>
    <location>
        <position position="224"/>
    </location>
</feature>
<feature type="sequence variant" id="VAR_012402" description="In FD; dbSNP:rs869312383." evidence="6">
    <original>N</original>
    <variation>S</variation>
    <location>
        <position position="224"/>
    </location>
</feature>
<feature type="sequence variant" id="VAR_012403" description="In FD; dbSNP:rs1928196393." evidence="6">
    <original>W</original>
    <variation>R</variation>
    <location>
        <position position="226"/>
    </location>
</feature>
<feature type="sequence variant" id="VAR_077395" description="In FD; loss of enzyme activity; dbSNP:rs104894840." evidence="24">
    <original>R</original>
    <variation>P</variation>
    <location>
        <position position="227"/>
    </location>
</feature>
<feature type="sequence variant" id="VAR_000467" description="In FD; dbSNP:rs104894840." evidence="6 28">
    <original>R</original>
    <variation>Q</variation>
    <location>
        <position position="227"/>
    </location>
</feature>
<feature type="sequence variant" id="VAR_077396" description="In FD; uncertain significance; decreased enzyme activity; dbSNP:rs869312152." evidence="24">
    <original>N</original>
    <variation>S</variation>
    <location>
        <position position="228"/>
    </location>
</feature>
<feature type="sequence variant" id="VAR_012404" description="In FD; dbSNP:rs1928195468." evidence="6">
    <original>A</original>
    <variation>T</variation>
    <location>
        <position position="230"/>
    </location>
</feature>
<feature type="sequence variant" id="VAR_000468" description="In FD." evidence="40">
    <original>D</original>
    <variation>N</variation>
    <location>
        <position position="231"/>
    </location>
</feature>
<feature type="sequence variant" id="VAR_062561" description="In FD." evidence="16">
    <original>D</original>
    <variation>E</variation>
    <location>
        <position position="234"/>
    </location>
</feature>
<feature type="sequence variant" id="VAR_012405" description="In FD; dbSNP:rs797044746." evidence="4">
    <original>S</original>
    <variation>C</variation>
    <location>
        <position position="235"/>
    </location>
</feature>
<feature type="sequence variant" id="VAR_012406" description="In FD; dbSNP:rs869312386." evidence="41">
    <original>W</original>
    <variation>C</variation>
    <location>
        <position position="236"/>
    </location>
</feature>
<feature type="sequence variant" id="VAR_012407" description="In FD." evidence="4">
    <original>W</original>
    <variation>L</variation>
    <location>
        <position position="236"/>
    </location>
</feature>
<feature type="sequence variant" id="VAR_012408" description="In FD." evidence="44">
    <original>I</original>
    <variation>N</variation>
    <location>
        <position position="242"/>
    </location>
</feature>
<feature type="sequence variant" id="VAR_077397" description="In FD; uncertain significance; decreased enzyme activity; dbSNP:rs397515873." evidence="24">
    <original>I</original>
    <variation>V</variation>
    <location>
        <position position="242"/>
    </location>
</feature>
<feature type="sequence variant" id="VAR_077398" description="In FD; uncertain significance; decreased enzyme activity; dbSNP:rs397515874." evidence="24">
    <original>L</original>
    <variation>F</variation>
    <location>
        <position position="243"/>
    </location>
</feature>
<feature type="sequence variant" id="VAR_012409" description="In FD; dbSNP:rs727503948." evidence="4">
    <original>D</original>
    <variation>H</variation>
    <location>
        <position position="244"/>
    </location>
</feature>
<feature type="sequence variant" id="VAR_000469" description="In FD; dbSNP:rs727503948." evidence="29">
    <original>D</original>
    <variation>N</variation>
    <location>
        <position position="244"/>
    </location>
</feature>
<feature type="sequence variant" id="VAR_077399" description="In FD; loss of enzyme activity; dbSNP:rs869312393." evidence="24">
    <original>S</original>
    <variation>P</variation>
    <location>
        <position position="247"/>
    </location>
</feature>
<feature type="sequence variant" id="VAR_000470" description="In FD.">
    <original>S</original>
    <variation>SWTS</variation>
    <location>
        <position position="247"/>
    </location>
</feature>
<feature type="sequence variant" id="VAR_077400" description="In FD; uncertain significance; decreased enzyme activity." evidence="24">
    <original>N</original>
    <variation>K</variation>
    <location>
        <position position="249"/>
    </location>
</feature>
<feature type="sequence variant" id="VAR_077401" description="In FD; uncertain significance; decreased enzyme activity; dbSNP:rs727505292." evidence="24">
    <original>I</original>
    <variation>T</variation>
    <location>
        <position position="253"/>
    </location>
</feature>
<feature type="sequence variant" id="VAR_077402" description="In FD; uncertain significance; decreased enzyme activity; dbSNP:rs869312153." evidence="24">
    <original>V</original>
    <variation>A</variation>
    <location>
        <position position="254"/>
    </location>
</feature>
<feature type="sequence variant" id="VAR_012410" description="In FD." evidence="9">
    <original>G</original>
    <variation>R</variation>
    <location>
        <position position="258"/>
    </location>
</feature>
<feature type="sequence variant" id="VAR_012411" description="In FD; dbSNP:rs869312399." evidence="4">
    <original>P</original>
    <variation>L</variation>
    <location>
        <position position="259"/>
    </location>
</feature>
<feature type="sequence variant" id="VAR_012412" description="In FD; decreased enzyme activity; dbSNP:rs869312399." evidence="9 24">
    <original>P</original>
    <variation>R</variation>
    <location>
        <position position="259"/>
    </location>
</feature>
<feature type="sequence variant" id="VAR_012413" description="In FD." evidence="30 44">
    <original>G</original>
    <variation>A</variation>
    <location>
        <position position="260"/>
    </location>
</feature>
<feature type="sequence variant" id="VAR_012414" description="In FD; dbSNP:rs869312401." evidence="16 44">
    <original>G</original>
    <variation>D</variation>
    <location>
        <position position="261"/>
    </location>
</feature>
<feature type="sequence variant" id="VAR_077403" description="In FD; loss of enzyme activity; dbSNP:rs869312154." evidence="24">
    <original>W</original>
    <variation>R</variation>
    <location>
        <position position="262"/>
    </location>
</feature>
<feature type="sequence variant" id="VAR_012415" description="In FD; dbSNP:rs869312404." evidence="43">
    <original>N</original>
    <variation>S</variation>
    <location>
        <position position="263"/>
    </location>
</feature>
<feature type="sequence variant" id="VAR_000471" description="In FD; dbSNP:rs28935486." evidence="16 28">
    <original>D</original>
    <variation>V</variation>
    <location>
        <position position="264"/>
    </location>
</feature>
<feature type="sequence variant" id="VAR_062562" description="In FD; dbSNP:rs190347120." evidence="16">
    <original>D</original>
    <variation>Y</variation>
    <location>
        <position position="264"/>
    </location>
</feature>
<feature type="sequence variant" id="VAR_012416" description="In FD." evidence="42">
    <original>P</original>
    <variation>R</variation>
    <location>
        <position position="265"/>
    </location>
</feature>
<feature type="sequence variant" id="VAR_032291" description="In FD." evidence="6">
    <original>D</original>
    <variation>H</variation>
    <location>
        <position position="266"/>
    </location>
</feature>
<feature type="sequence variant" id="VAR_012418" description="In FD; dbSNP:rs869312407." evidence="7">
    <original>D</original>
    <variation>N</variation>
    <location>
        <position position="266"/>
    </location>
</feature>
<feature type="sequence variant" id="VAR_000472" description="In FD; dbSNP:rs28935487." evidence="28">
    <original>D</original>
    <variation>V</variation>
    <location>
        <position position="266"/>
    </location>
</feature>
<feature type="sequence variant" id="VAR_012419" description="In FD; dbSNP:rs730880451." evidence="4 9">
    <original>M</original>
    <variation>I</variation>
    <location>
        <position position="267"/>
    </location>
</feature>
<feature type="sequence variant" id="VAR_000473" description="In FD; dbSNP:rs28935488." evidence="35">
    <original>V</original>
    <variation>A</variation>
    <location>
        <position position="269"/>
    </location>
</feature>
<feature type="sequence variant" id="VAR_077404" description="In FD; loss of enzyme activity; dbSNP:rs28935488." evidence="24">
    <original>V</original>
    <variation>G</variation>
    <location>
        <position position="269"/>
    </location>
</feature>
<feature type="sequence variant" id="VAR_000474" description="In FD." evidence="29">
    <original>N</original>
    <variation>K</variation>
    <location>
        <position position="272"/>
    </location>
</feature>
<feature type="sequence variant" id="VAR_032292" description="In FD; dbSNP:rs28935495." evidence="15">
    <original>N</original>
    <variation>S</variation>
    <location>
        <position position="272"/>
    </location>
</feature>
<feature type="sequence variant" id="VAR_062563" description="In FD; loss of enzyme activity; dbSNP:rs869312432." evidence="16 24">
    <original>S</original>
    <variation>G</variation>
    <location>
        <position position="276"/>
    </location>
</feature>
<feature type="sequence variant" id="VAR_000475" description="In FD; mild; does not significantly affect the enzyme activity but the mutant protein levels are decreased presumably in the ER of the cells; dbSNP:rs28935485." evidence="5 13 30 44">
    <original>Q</original>
    <variation>E</variation>
    <location>
        <position position="279"/>
    </location>
</feature>
<feature type="sequence variant" id="VAR_012420" description="In FD." evidence="9">
    <original>Q</original>
    <variation>H</variation>
    <location>
        <position position="279"/>
    </location>
</feature>
<feature type="sequence variant" id="VAR_012421" description="In FD." evidence="9">
    <original>Q</original>
    <variation>H</variation>
    <location>
        <position position="280"/>
    </location>
</feature>
<feature type="sequence variant" id="VAR_000476" description="In FD; dbSNP:rs1928171557." evidence="38">
    <original>M</original>
    <variation>T</variation>
    <location>
        <position position="284"/>
    </location>
</feature>
<feature type="sequence variant" id="VAR_062564" description="In FD." evidence="16">
    <original>A</original>
    <variation>P</variation>
    <location>
        <position position="285"/>
    </location>
</feature>
<feature type="sequence variant" id="VAR_012422" description="In FD; dbSNP:rs104894839." evidence="43">
    <original>W</original>
    <variation>C</variation>
    <location>
        <position position="287"/>
    </location>
</feature>
<feature type="sequence variant" id="VAR_012423" description="In FD." evidence="41">
    <original>W</original>
    <variation>G</variation>
    <location>
        <position position="287"/>
    </location>
</feature>
<feature type="sequence variant" id="VAR_000477" description="In FD; dbSNP:rs869312437." evidence="29">
    <original>A</original>
    <variation>D</variation>
    <location>
        <position position="288"/>
    </location>
</feature>
<feature type="sequence variant" id="VAR_012424" description="In FD; dbSNP:rs140329381." evidence="4">
    <original>I</original>
    <variation>F</variation>
    <location>
        <position position="289"/>
    </location>
</feature>
<feature type="sequence variant" id="VAR_077405" description="Decreased enzyme activity; dbSNP:rs140329381." evidence="24">
    <original>I</original>
    <variation>V</variation>
    <location>
        <position position="289"/>
    </location>
</feature>
<feature type="sequence variant" id="VAR_012425" description="In FD; atypical; dbSNP:rs104894846." evidence="30 31 44">
    <original>M</original>
    <variation>I</variation>
    <location>
        <position position="296"/>
    </location>
</feature>
<feature type="sequence variant" id="VAR_000478" description="In FD; mild; dbSNP:rs104894830." evidence="18">
    <original>M</original>
    <variation>V</variation>
    <location>
        <position position="296"/>
    </location>
</feature>
<feature type="sequence variant" id="VAR_000479" description="In FD; dbSNP:rs28935489." evidence="28">
    <original>S</original>
    <variation>F</variation>
    <location>
        <position position="297"/>
    </location>
</feature>
<feature type="sequence variant" id="VAR_012426" description="In FD." evidence="9 41">
    <original>N</original>
    <variation>H</variation>
    <location>
        <position position="298"/>
    </location>
</feature>
<feature type="sequence variant" id="VAR_000480" description="In FD; dbSNP:rs869312444." evidence="38">
    <original>N</original>
    <variation>K</variation>
    <location>
        <position position="298"/>
    </location>
</feature>
<feature type="sequence variant" id="VAR_012427" description="In FD; dbSNP:rs1569302985." evidence="43">
    <original>N</original>
    <variation>S</variation>
    <location>
        <position position="298"/>
    </location>
</feature>
<feature type="sequence variant" id="VAR_062565" description="In FD; dbSNP:rs2147472132." evidence="16">
    <original>L</original>
    <variation>F</variation>
    <location>
        <position position="300"/>
    </location>
</feature>
<feature type="sequence variant" id="VAR_000481" description="In FD; mild; does not significantly affect the enzyme activity but the mutant protein levels are decreased presumably in the ER of the cells; dbSNP:rs104894828." evidence="3 5 6 13 22 30 32 36 44">
    <original>R</original>
    <variation>Q</variation>
    <location>
        <position position="301"/>
    </location>
</feature>
<feature type="sequence variant" id="VAR_077406" description="In FD; uncertain significance; decreased enzyme activity; dbSNP:rs869312155." evidence="24">
    <original>A</original>
    <variation>V</variation>
    <location>
        <position position="309"/>
    </location>
</feature>
<feature type="sequence variant" id="VAR_077407" description="Does not affect enzyme activity; dbSNP:rs28935490." evidence="24">
    <original>D</original>
    <variation>N</variation>
    <location>
        <position position="313"/>
    </location>
</feature>
<feature type="sequence variant" id="VAR_000482" description="In FD; dbSNP:rs28935490." evidence="9 28 47">
    <original>D</original>
    <variation>Y</variation>
    <location>
        <position position="313"/>
    </location>
</feature>
<feature type="sequence variant" id="VAR_077408" description="In FD; uncertain significance; decreased enzyme activity; dbSNP:rs869312156." evidence="24">
    <original>D</original>
    <variation>N</variation>
    <location>
        <position position="315"/>
    </location>
</feature>
<feature type="sequence variant" id="VAR_012429" description="In FD." evidence="42">
    <location>
        <begin position="316"/>
        <end position="322"/>
    </location>
</feature>
<feature type="sequence variant" id="VAR_077409" description="In FD; uncertain significance; decreased enzyme activity; dbSNP:rs869312157." evidence="24">
    <original>V</original>
    <variation>A</variation>
    <location>
        <position position="316"/>
    </location>
</feature>
<feature type="sequence variant" id="VAR_000483" description="In FD." evidence="34">
    <original>V</original>
    <variation>E</variation>
    <location>
        <position position="316"/>
    </location>
</feature>
<feature type="sequence variant" id="VAR_077410" description="In FD; loss of enzyme activity; dbSNP:rs869312158." evidence="24">
    <original>I</original>
    <variation>S</variation>
    <location>
        <position position="317"/>
    </location>
</feature>
<feature type="sequence variant" id="VAR_012430" description="In FD." evidence="30 44">
    <original>N</original>
    <variation>K</variation>
    <location>
        <position position="320"/>
    </location>
</feature>
<feature type="sequence variant" id="VAR_012431" description="In FD; loss of enzyme activity." evidence="6 24">
    <original>N</original>
    <variation>Y</variation>
    <location>
        <position position="320"/>
    </location>
</feature>
<feature type="sequence variant" id="VAR_012432" description="In FD; dbSNP:rs730880439." evidence="4">
    <original>Q</original>
    <variation>E</variation>
    <location>
        <position position="321"/>
    </location>
</feature>
<feature type="sequence variant" id="VAR_077411" description="In FD; uncertain significance; decreased enzyme activity; dbSNP:rs869312159." evidence="24">
    <original>P</original>
    <variation>R</variation>
    <location>
        <position position="323"/>
    </location>
</feature>
<feature type="sequence variant" id="VAR_000484" description="In FD; dbSNP:rs28935491." evidence="3 35">
    <original>Q</original>
    <variation>K</variation>
    <location>
        <position position="327"/>
    </location>
</feature>
<feature type="sequence variant" id="VAR_077412" description="In FD; loss of enzyme activity; dbSNP:rs869312160." evidence="24">
    <original>Q</original>
    <variation>L</variation>
    <location>
        <position position="327"/>
    </location>
</feature>
<feature type="sequence variant" id="VAR_077413" description="In FD; loss of enzyme activity; dbSNP:rs869312160." evidence="24">
    <original>Q</original>
    <variation>R</variation>
    <location>
        <position position="327"/>
    </location>
</feature>
<feature type="sequence variant" id="VAR_000486" description="In FD; dbSNP:rs28935492." evidence="16 28">
    <original>G</original>
    <variation>A</variation>
    <location>
        <position position="328"/>
    </location>
</feature>
<feature type="sequence variant" id="VAR_000485" description="In FD; loss of enzyme activity; dbSNP:rs104894832." evidence="13 24 30 44">
    <original>G</original>
    <variation>R</variation>
    <location>
        <position position="328"/>
    </location>
</feature>
<feature type="sequence variant" id="VAR_062566" description="In FD; dbSNP:rs28935492." evidence="16">
    <original>G</original>
    <variation>V</variation>
    <location>
        <position position="328"/>
    </location>
</feature>
<feature type="sequence variant" id="VAR_077414" description="In FD; uncertain significance; decreased enzyme activity; dbSNP:rs869312161." evidence="24">
    <original>Q</original>
    <variation>R</variation>
    <location>
        <position position="330"/>
    </location>
</feature>
<feature type="sequence variant" id="VAR_062567" description="In FD." evidence="16">
    <original>E</original>
    <variation>K</variation>
    <location>
        <position position="338"/>
    </location>
</feature>
<feature type="sequence variant" id="VAR_012433" description="In FD; dbSNP:rs1555984869." evidence="41">
    <original>W</original>
    <variation>R</variation>
    <location>
        <position position="340"/>
    </location>
</feature>
<feature type="sequence variant" id="VAR_012434" description="In FD; dbSNP:rs869312214." evidence="2">
    <original>E</original>
    <variation>K</variation>
    <location>
        <position position="341"/>
    </location>
</feature>
<feature type="sequence variant" id="VAR_077415" description="In FD; loss of enzyme activity." evidence="24">
    <original>R</original>
    <variation>P</variation>
    <location>
        <position position="342"/>
    </location>
</feature>
<feature type="sequence variant" id="VAR_000487" description="In FD; severe; dbSNP:rs28935493." evidence="29">
    <original>R</original>
    <variation>Q</variation>
    <location>
        <position position="342"/>
    </location>
</feature>
<feature type="sequence variant" id="VAR_077416" description="In FD; uncertain significance; decreased enzyme activity; dbSNP:rs869312162." evidence="24">
    <original>A</original>
    <variation>G</variation>
    <location>
        <position position="352"/>
    </location>
</feature>
<feature type="sequence variant" id="VAR_077417" description="In FD; loss of enzyme activity; dbSNP:rs869312163." evidence="24">
    <original>R</original>
    <variation>P</variation>
    <location>
        <position position="356"/>
    </location>
</feature>
<feature type="sequence variant" id="VAR_062568" description="In FD; has 15% of wild-type activity; dbSNP:rs869312163." evidence="20">
    <original>R</original>
    <variation>Q</variation>
    <location>
        <position position="356"/>
    </location>
</feature>
<feature type="sequence variant" id="VAR_000488" description="In FD; severe; dbSNP:rs104894827." evidence="23">
    <original>R</original>
    <variation>W</variation>
    <location>
        <position position="356"/>
    </location>
</feature>
<feature type="sequence variant" id="VAR_062569" description="In FD; dbSNP:rs869312224." evidence="16">
    <original>E</original>
    <variation>A</variation>
    <location>
        <position position="358"/>
    </location>
</feature>
<feature type="sequence variant" id="VAR_000489" description="In FD; loss of enzyme activity; dbSNP:rs797044774." evidence="24 45">
    <original>E</original>
    <variation>K</variation>
    <location>
        <position position="358"/>
    </location>
</feature>
<feature type="sequence variant" id="VAR_000490" description="In FD; dbSNP:rs730880453." evidence="4 16 38 44">
    <location>
        <position position="358"/>
    </location>
</feature>
<feature type="sequence variant" id="VAR_062570" description="In FD; has 6% of wild-type activity; dbSNP:rs782598150." evidence="20">
    <original>G</original>
    <variation>C</variation>
    <location>
        <position position="360"/>
    </location>
</feature>
<feature type="sequence variant" id="VAR_077418" description="In FD; loss of enzyme activity." evidence="24">
    <original>G</original>
    <variation>S</variation>
    <location>
        <position position="360"/>
    </location>
</feature>
<feature type="sequence variant" id="VAR_000491" description="In FD; severe; dbSNP:rs28935494." evidence="35">
    <original>G</original>
    <variation>R</variation>
    <location>
        <position position="361"/>
    </location>
</feature>
<feature type="sequence variant" id="VAR_012435" description="In FD; dbSNP:rs111422676." evidence="9">
    <original>R</original>
    <variation>H</variation>
    <location>
        <position position="363"/>
    </location>
</feature>
<feature type="sequence variant" id="VAR_012436" description="In FD; dbSNP:rs869312227." evidence="8">
    <original>G</original>
    <variation>D</variation>
    <location>
        <position position="373"/>
    </location>
</feature>
<feature type="sequence variant" id="VAR_012437" description="In FD; dbSNP:rs727504348." evidence="30 44">
    <original>G</original>
    <variation>S</variation>
    <location>
        <position position="373"/>
    </location>
</feature>
<feature type="sequence variant" id="VAR_077419" description="In FD; uncertain significance; decreased enzyme activity; dbSNP:rs869312164." evidence="24">
    <original>G</original>
    <variation>A</variation>
    <location>
        <position position="375"/>
    </location>
</feature>
<feature type="sequence variant" id="VAR_012438" description="In FD." evidence="9">
    <original>A</original>
    <variation>D</variation>
    <location>
        <position position="377"/>
    </location>
</feature>
<feature type="sequence variant" id="VAR_012439" description="In FD." evidence="4">
    <original>C</original>
    <variation>Y</variation>
    <location>
        <position position="378"/>
    </location>
</feature>
<feature type="sequence variant" id="VAR_000492" description="In FD; severe; with facial telangiectasias; dbSNP:rs1057519609." evidence="39">
    <location>
        <position position="383"/>
    </location>
</feature>
<feature type="sequence variant" id="VAR_077420" description="In FD; uncertain significance; decreased enzyme activity; dbSNP:rs869312165." evidence="24">
    <original>R</original>
    <variation>S</variation>
    <location>
        <position position="392"/>
    </location>
</feature>
<feature type="sequence variant" id="VAR_000493" description="In RNA edited version.">
    <original>F</original>
    <variation>Y</variation>
    <location>
        <position position="396"/>
    </location>
</feature>
<feature type="sequence variant" id="VAR_077421" description="In FD; uncertain significance; decreased enzyme activity; dbSNP:rs782449839." evidence="24">
    <original>W</original>
    <variation>S</variation>
    <location>
        <position position="399"/>
    </location>
</feature>
<feature type="sequence variant" id="VAR_000494" description="In FD; mild; loss of enzyme activity." evidence="16 24 28 43">
    <location>
        <position position="404"/>
    </location>
</feature>
<feature type="sequence variant" id="VAR_012440" description="In FD; dbSNP:rs878853698." evidence="9">
    <original>P</original>
    <variation>A</variation>
    <location>
        <position position="409"/>
    </location>
</feature>
<feature type="sequence variant" id="VAR_012441" description="In FD." evidence="9">
    <original>P</original>
    <variation>T</variation>
    <location>
        <position position="409"/>
    </location>
</feature>
<feature type="sequence variant" id="VAR_032293" description="In FD; mild; dbSNP:rs104894852." evidence="11">
    <original>T</original>
    <variation>A</variation>
    <location>
        <position position="410"/>
    </location>
</feature>
<feature type="sequence variant" id="VAR_062571" description="In FD; dbSNP:rs869312246." evidence="16">
    <original>L</original>
    <variation>S</variation>
    <location>
        <position position="414"/>
    </location>
</feature>
<feature type="strand" evidence="55">
    <location>
        <begin position="42"/>
        <end position="46"/>
    </location>
</feature>
<feature type="helix" evidence="55">
    <location>
        <begin position="47"/>
        <end position="50"/>
    </location>
</feature>
<feature type="turn" evidence="55">
    <location>
        <begin position="56"/>
        <end position="58"/>
    </location>
</feature>
<feature type="turn" evidence="55">
    <location>
        <begin position="60"/>
        <end position="62"/>
    </location>
</feature>
<feature type="strand" evidence="55">
    <location>
        <begin position="63"/>
        <end position="65"/>
    </location>
</feature>
<feature type="helix" evidence="55">
    <location>
        <begin position="66"/>
        <end position="78"/>
    </location>
</feature>
<feature type="helix" evidence="55">
    <location>
        <begin position="81"/>
        <end position="84"/>
    </location>
</feature>
<feature type="strand" evidence="55">
    <location>
        <begin position="88"/>
        <end position="90"/>
    </location>
</feature>
<feature type="strand" evidence="54">
    <location>
        <begin position="102"/>
        <end position="104"/>
    </location>
</feature>
<feature type="turn" evidence="55">
    <location>
        <begin position="110"/>
        <end position="112"/>
    </location>
</feature>
<feature type="strand" evidence="53">
    <location>
        <begin position="113"/>
        <end position="115"/>
    </location>
</feature>
<feature type="helix" evidence="55">
    <location>
        <begin position="116"/>
        <end position="126"/>
    </location>
</feature>
<feature type="strand" evidence="55">
    <location>
        <begin position="130"/>
        <end position="140"/>
    </location>
</feature>
<feature type="strand" evidence="55">
    <location>
        <begin position="144"/>
        <end position="146"/>
    </location>
</feature>
<feature type="turn" evidence="56">
    <location>
        <begin position="149"/>
        <end position="151"/>
    </location>
</feature>
<feature type="helix" evidence="55">
    <location>
        <begin position="152"/>
        <end position="162"/>
    </location>
</feature>
<feature type="strand" evidence="55">
    <location>
        <begin position="166"/>
        <end position="170"/>
    </location>
</feature>
<feature type="helix" evidence="55">
    <location>
        <begin position="177"/>
        <end position="193"/>
    </location>
</feature>
<feature type="strand" evidence="55">
    <location>
        <begin position="199"/>
        <end position="202"/>
    </location>
</feature>
<feature type="helix" evidence="55">
    <location>
        <begin position="205"/>
        <end position="208"/>
    </location>
</feature>
<feature type="turn" evidence="55">
    <location>
        <begin position="209"/>
        <end position="211"/>
    </location>
</feature>
<feature type="helix" evidence="55">
    <location>
        <begin position="216"/>
        <end position="222"/>
    </location>
</feature>
<feature type="strand" evidence="55">
    <location>
        <begin position="224"/>
        <end position="227"/>
    </location>
</feature>
<feature type="helix" evidence="55">
    <location>
        <begin position="236"/>
        <end position="248"/>
    </location>
</feature>
<feature type="helix" evidence="55">
    <location>
        <begin position="250"/>
        <end position="253"/>
    </location>
</feature>
<feature type="turn" evidence="55">
    <location>
        <begin position="254"/>
        <end position="256"/>
    </location>
</feature>
<feature type="strand" evidence="55">
    <location>
        <begin position="261"/>
        <end position="264"/>
    </location>
</feature>
<feature type="strand" evidence="55">
    <location>
        <begin position="272"/>
        <end position="274"/>
    </location>
</feature>
<feature type="helix" evidence="55">
    <location>
        <begin position="277"/>
        <end position="289"/>
    </location>
</feature>
<feature type="strand" evidence="55">
    <location>
        <begin position="294"/>
        <end position="296"/>
    </location>
</feature>
<feature type="helix" evidence="55">
    <location>
        <begin position="305"/>
        <end position="311"/>
    </location>
</feature>
<feature type="helix" evidence="55">
    <location>
        <begin position="314"/>
        <end position="320"/>
    </location>
</feature>
<feature type="strand" evidence="55">
    <location>
        <begin position="329"/>
        <end position="334"/>
    </location>
</feature>
<feature type="strand" evidence="55">
    <location>
        <begin position="337"/>
        <end position="343"/>
    </location>
</feature>
<feature type="helix" evidence="57">
    <location>
        <begin position="345"/>
        <end position="347"/>
    </location>
</feature>
<feature type="strand" evidence="55">
    <location>
        <begin position="349"/>
        <end position="355"/>
    </location>
</feature>
<feature type="strand" evidence="55">
    <location>
        <begin position="359"/>
        <end position="361"/>
    </location>
</feature>
<feature type="strand" evidence="55">
    <location>
        <begin position="363"/>
        <end position="368"/>
    </location>
</feature>
<feature type="helix" evidence="55">
    <location>
        <begin position="369"/>
        <end position="371"/>
    </location>
</feature>
<feature type="helix" evidence="55">
    <location>
        <begin position="373"/>
        <end position="375"/>
    </location>
</feature>
<feature type="turn" evidence="55">
    <location>
        <begin position="376"/>
        <end position="378"/>
    </location>
</feature>
<feature type="strand" evidence="55">
    <location>
        <begin position="379"/>
        <end position="390"/>
    </location>
</feature>
<feature type="strand" evidence="55">
    <location>
        <begin position="392"/>
        <end position="398"/>
    </location>
</feature>
<feature type="strand" evidence="55">
    <location>
        <begin position="402"/>
        <end position="407"/>
    </location>
</feature>
<feature type="strand" evidence="55">
    <location>
        <begin position="412"/>
        <end position="419"/>
    </location>
</feature>
<feature type="helix" evidence="55">
    <location>
        <begin position="420"/>
        <end position="424"/>
    </location>
</feature>
<comment type="function">
    <text evidence="5 37">Catalyzes the hydrolysis of glycosphingolipids and participates in their degradation in the lysosome.</text>
</comment>
<comment type="catalytic activity">
    <reaction evidence="24 26">
        <text>Hydrolysis of terminal, non-reducing alpha-D-galactose residues in alpha-D-galactosides, including galactose oligosaccharides, galactomannans and galactolipids.</text>
        <dbReference type="EC" id="3.2.1.22"/>
    </reaction>
</comment>
<comment type="catalytic activity">
    <reaction evidence="5 37">
        <text>a globoside Gb3Cer (d18:1(4E)) + H2O = a beta-D-Gal-(1-&gt;4)-beta-D-Glc-(1&lt;-&gt;1)-Cer(d18:1(4E)) + D-galactose</text>
        <dbReference type="Rhea" id="RHEA:21112"/>
        <dbReference type="ChEBI" id="CHEBI:4139"/>
        <dbReference type="ChEBI" id="CHEBI:15377"/>
        <dbReference type="ChEBI" id="CHEBI:17950"/>
        <dbReference type="ChEBI" id="CHEBI:18313"/>
    </reaction>
    <physiologicalReaction direction="left-to-right" evidence="50 51">
        <dbReference type="Rhea" id="RHEA:21113"/>
    </physiologicalReaction>
</comment>
<comment type="catalytic activity">
    <reaction evidence="5 37">
        <text>a globoside Gb3Cer + H2O = a beta-D-galactosyl-(1-&gt;4)-beta-D-glucosyl-(1&lt;-&gt;1)-ceramide + D-galactose</text>
        <dbReference type="Rhea" id="RHEA:48020"/>
        <dbReference type="ChEBI" id="CHEBI:4139"/>
        <dbReference type="ChEBI" id="CHEBI:15377"/>
        <dbReference type="ChEBI" id="CHEBI:79208"/>
        <dbReference type="ChEBI" id="CHEBI:88154"/>
    </reaction>
    <physiologicalReaction direction="left-to-right" evidence="50 51">
        <dbReference type="Rhea" id="RHEA:48021"/>
    </physiologicalReaction>
</comment>
<comment type="activity regulation">
    <text evidence="5 37">Galactosylgalactosylglucosylceramidase activity is stimulated by saposin B and ammonium chloride.</text>
</comment>
<comment type="subunit">
    <text evidence="14">Homodimer.</text>
</comment>
<comment type="interaction">
    <interactant intactId="EBI-2513305">
        <id>P06280</id>
    </interactant>
    <interactant intactId="EBI-1048799">
        <id>Q2TAA5</id>
        <label>ALG11</label>
    </interactant>
    <organismsDiffer>false</organismsDiffer>
    <experiments>2</experiments>
</comment>
<comment type="interaction">
    <interactant intactId="EBI-2513305">
        <id>P06280</id>
    </interactant>
    <interactant intactId="EBI-1057058">
        <id>Q99523</id>
        <label>SORT1</label>
    </interactant>
    <organismsDiffer>false</organismsDiffer>
    <experiments>3</experiments>
</comment>
<comment type="subcellular location">
    <subcellularLocation>
        <location>Lysosome</location>
    </subcellularLocation>
</comment>
<comment type="RNA editing">
    <location>
        <position position="396" evidence="27"/>
    </location>
    <text>Partially edited.</text>
</comment>
<comment type="disease" evidence="2 3 4 5 6 7 8 9 10 11 12 13 15 16 17 18 20 21 22 23 24 25 26 28 29 30 31 32 33 34 35 36 38 39 40 41 42 43 44 45 46 47 48">
    <disease id="DI-01544">
        <name>Fabry disease</name>
        <acronym>FD</acronym>
        <description>Rare X-linked sphingolipidosis disease where glycolipid accumulates in many tissues. The disease consists of an inborn error of glycosphingolipid catabolism. FD patients show systemic accumulation of globotriaosylceramide (Gb3) and related glycosphingolipids in the plasma and cellular lysosomes throughout the body. Clinical recognition in males results from characteristic skin lesions (angiokeratomas) over the lower trunk. Patients may show ocular deposits, febrile episodes, and burning pain in the extremities. Death results from renal failure, cardiac or cerebral complications of hypertension or other vascular disease. Heterozygous females may exhibit the disorder in an attenuated form, they are more likely to show corneal opacities.</description>
        <dbReference type="MIM" id="301500"/>
    </disease>
    <text>The disease is caused by variants affecting the gene represented in this entry.</text>
</comment>
<comment type="pharmaceutical">
    <text>Available under the names Replagal (from Shire) and Fabrazyme (from Genzyme). Used as a long-term enzyme replacement therapy in patients with a confirmed diagnosis of Fabry disease. The differences between Replagal (also known as agalsidase alpha) and Fabrazyme (also known as agalsidase beta) lies in the glycosylation patterns. Agalsidase beta is produced in the hamster CHO cell line while agalsidase alpha is produced in human cell lines.</text>
</comment>
<comment type="similarity">
    <text evidence="49">Belongs to the glycosyl hydrolase 27 family.</text>
</comment>